<protein>
    <recommendedName>
        <fullName evidence="24">Ubiquitin-ribosomal protein eS31 fusion protein</fullName>
    </recommendedName>
    <alternativeName>
        <fullName>Ubiquitin carboxyl extension protein 80</fullName>
    </alternativeName>
    <component>
        <recommendedName>
            <fullName>Ubiquitin</fullName>
        </recommendedName>
    </component>
    <component>
        <recommendedName>
            <fullName evidence="23">Small ribosomal subunit protein eS31</fullName>
        </recommendedName>
        <alternativeName>
            <fullName>40S ribosomal protein S27a</fullName>
        </alternativeName>
    </component>
</protein>
<accession>P62979</accession>
<accession>P02248</accession>
<accession>P02249</accession>
<accession>P02250</accession>
<accession>P14798</accession>
<accession>P62988</accession>
<accession>Q29120</accession>
<accession>Q6LBL4</accession>
<accession>Q6LDU5</accession>
<accession>Q8WYN8</accession>
<accession>Q91887</accession>
<accession>Q91888</accession>
<accession>Q9BQ77</accession>
<accession>Q9BWD6</accession>
<accession>Q9BX98</accession>
<accession>Q9UEF2</accession>
<accession>Q9UEG1</accession>
<accession>Q9UEK8</accession>
<accession>Q9UPK7</accession>
<feature type="chain" id="PRO_0000396477" description="Ubiquitin">
    <location>
        <begin position="1"/>
        <end position="76"/>
    </location>
</feature>
<feature type="chain" id="PRO_0000396478" description="Small ribosomal subunit protein eS31">
    <location>
        <begin position="77"/>
        <end position="156"/>
    </location>
</feature>
<feature type="domain" description="Ubiquitin-like" evidence="3">
    <location>
        <begin position="1"/>
        <end position="76"/>
    </location>
</feature>
<feature type="zinc finger region" description="C4-type">
    <location>
        <begin position="121"/>
        <end position="144"/>
    </location>
</feature>
<feature type="region of interest" description="Disordered" evidence="4">
    <location>
        <begin position="76"/>
        <end position="95"/>
    </location>
</feature>
<feature type="site" description="Interacts with activating enzyme">
    <location>
        <position position="54"/>
    </location>
</feature>
<feature type="site" description="Essential for function">
    <location>
        <position position="68"/>
    </location>
</feature>
<feature type="site" description="Interacts with activating enzyme">
    <location>
        <position position="72"/>
    </location>
</feature>
<feature type="modified residue" description="Phosphoserine; by PINK1" evidence="9 10 11 13">
    <location>
        <position position="65"/>
    </location>
</feature>
<feature type="modified residue" description="(Microbial infection) ADP-ribosylthreonine" evidence="18">
    <location>
        <position position="66"/>
    </location>
</feature>
<feature type="modified residue" description="ADP-ribosylglycine" evidence="16">
    <location>
        <position position="76"/>
    </location>
</feature>
<feature type="modified residue" description="N6-acetyllysine" evidence="30">
    <location>
        <position position="104"/>
    </location>
</feature>
<feature type="modified residue" description="N6-acetyllysine" evidence="30">
    <location>
        <position position="113"/>
    </location>
</feature>
<feature type="modified residue" description="N6-acetyllysine" evidence="2">
    <location>
        <position position="152"/>
    </location>
</feature>
<feature type="cross-link" description="Glycyl lysine isopeptide (Lys-Gly) (interchain with G-Cter in ubiquitin)" evidence="5">
    <location>
        <position position="6"/>
    </location>
</feature>
<feature type="cross-link" description="Glycyl lysine isopeptide (Lys-Gly) (interchain with G-Cter in ubiquitin)" evidence="5 6">
    <location>
        <position position="11"/>
    </location>
</feature>
<feature type="cross-link" description="Glycyl lysine isopeptide (Lys-Gly) (interchain with G-Cter in ubiquitin)" evidence="25">
    <location>
        <position position="27"/>
    </location>
</feature>
<feature type="cross-link" description="Glycyl lysine isopeptide (Lys-Gly) (interchain with G-Cter in ubiquitin)" evidence="6 14 15 19">
    <location>
        <position position="29"/>
    </location>
</feature>
<feature type="cross-link" description="Glycyl lysine isopeptide (Lys-Gly) (interchain with G-Cter in ubiquitin)" evidence="15">
    <location>
        <position position="33"/>
    </location>
</feature>
<feature type="cross-link" description="Glycyl lysine isopeptide (Lys-Gly) (interchain with G-Cter in ubiquitin)" evidence="5 6">
    <location>
        <position position="48"/>
    </location>
</feature>
<feature type="cross-link" description="Glycyl lysine isopeptide (Lys-Gly) (interchain with G-Cter in ubiquitin)" evidence="6 7">
    <location>
        <position position="63"/>
    </location>
</feature>
<feature type="cross-link" description="Glycyl lysine isopeptide (Gly-Lys) (interchain with K-? in acceptor proteins)">
    <location>
        <position position="76"/>
    </location>
</feature>
<feature type="cross-link" description="Glycyl lysine isopeptide (Lys-Gly) (interchain with G-Cter in ubiquitin)" evidence="21">
    <location>
        <position position="107"/>
    </location>
</feature>
<feature type="cross-link" description="Glycyl lysine isopeptide (Lys-Gly) (interchain with G-Cter in ubiquitin)" evidence="17 21">
    <location>
        <position position="113"/>
    </location>
</feature>
<feature type="mutagenesis site" description="No effect on HLTF-mediated polyubiquitination of PCNA." evidence="7">
    <original>K</original>
    <variation>R</variation>
    <location>
        <position position="48"/>
    </location>
</feature>
<feature type="mutagenesis site" description="Abolishes HLTF-mediated polyubiquitination of PCNA." evidence="7">
    <original>K</original>
    <variation>R</variation>
    <location>
        <position position="63"/>
    </location>
</feature>
<feature type="mutagenesis site" description="Prevents phosphorylation in case of mitophagy. Impaired translocation of PRKN to mitochondria." evidence="9 11 12">
    <original>S</original>
    <variation>A</variation>
    <location>
        <position position="65"/>
    </location>
</feature>
<feature type="mutagenesis site" description="Phosphomimetic mutant that binds and activates PRKN." evidence="10">
    <original>S</original>
    <variation>D</variation>
    <location>
        <position position="65"/>
    </location>
</feature>
<feature type="mutagenesis site" description="Phosphomimetic mutant that can recruit PRKN to mitochondria." evidence="12">
    <original>S</original>
    <variation>G</variation>
    <location>
        <position position="65"/>
    </location>
</feature>
<feature type="mutagenesis site" description="Loss of DTX3L-mediated polyubiquitination of histone H3 and H4." evidence="16">
    <original>H</original>
    <variation>G</variation>
    <location>
        <position position="68"/>
    </location>
</feature>
<feature type="mutagenesis site" description="No effect on ADP-ribosylation." evidence="16">
    <original>R</original>
    <variation>G</variation>
    <location>
        <position position="72"/>
    </location>
</feature>
<feature type="mutagenesis site" description="No effect on ADP-ribosylation, when associated with K-74." evidence="16">
    <original>R</original>
    <variation>K</variation>
    <location>
        <position position="72"/>
    </location>
</feature>
<feature type="mutagenesis site" description="No effect on ADP-ribosylation." evidence="16">
    <original>R</original>
    <variation>G</variation>
    <location>
        <position position="74"/>
    </location>
</feature>
<feature type="mutagenesis site" description="No effect on ADP-ribosylation, when associated with K-72." evidence="16">
    <original>R</original>
    <variation>K</variation>
    <location>
        <position position="74"/>
    </location>
</feature>
<feature type="mutagenesis site" description="Loss of ADP-ribosylation." evidence="16">
    <original>G</original>
    <variation>A</variation>
    <location>
        <position position="76"/>
    </location>
</feature>
<feature type="mutagenesis site" description="Abolished monoubiquitination by RNF25, leading to impaired ability to rescue stalled ribosomes; when associated with R-113." evidence="21">
    <original>K</original>
    <variation>R</variation>
    <location>
        <position position="107"/>
    </location>
</feature>
<feature type="mutagenesis site" description="Abolished monoubiquitination by RNF25, leading to impaired ability to rescue stalled ribosomes; when associated with R-107. Abolished deubiquitination by USP16, without affecting maturation of the 40S ribosomal complex." evidence="17 21">
    <original>K</original>
    <variation>R</variation>
    <location>
        <position position="113"/>
    </location>
</feature>
<feature type="strand" evidence="31">
    <location>
        <begin position="2"/>
        <end position="6"/>
    </location>
</feature>
<feature type="strand" evidence="31">
    <location>
        <begin position="8"/>
        <end position="10"/>
    </location>
</feature>
<feature type="strand" evidence="31">
    <location>
        <begin position="12"/>
        <end position="16"/>
    </location>
</feature>
<feature type="helix" evidence="31">
    <location>
        <begin position="23"/>
        <end position="34"/>
    </location>
</feature>
<feature type="helix" evidence="31">
    <location>
        <begin position="38"/>
        <end position="40"/>
    </location>
</feature>
<feature type="strand" evidence="31">
    <location>
        <begin position="42"/>
        <end position="45"/>
    </location>
</feature>
<feature type="strand" evidence="37">
    <location>
        <begin position="46"/>
        <end position="49"/>
    </location>
</feature>
<feature type="strand" evidence="32">
    <location>
        <begin position="54"/>
        <end position="56"/>
    </location>
</feature>
<feature type="helix" evidence="31">
    <location>
        <begin position="57"/>
        <end position="59"/>
    </location>
</feature>
<feature type="strand" evidence="31">
    <location>
        <begin position="66"/>
        <end position="70"/>
    </location>
</feature>
<feature type="helix" evidence="38">
    <location>
        <begin position="83"/>
        <end position="85"/>
    </location>
</feature>
<feature type="strand" evidence="34">
    <location>
        <begin position="86"/>
        <end position="88"/>
    </location>
</feature>
<feature type="turn" evidence="36">
    <location>
        <begin position="99"/>
        <end position="104"/>
    </location>
</feature>
<feature type="strand" evidence="33">
    <location>
        <begin position="106"/>
        <end position="108"/>
    </location>
</feature>
<feature type="strand" evidence="38">
    <location>
        <begin position="109"/>
        <end position="112"/>
    </location>
</feature>
<feature type="strand" evidence="36">
    <location>
        <begin position="116"/>
        <end position="118"/>
    </location>
</feature>
<feature type="strand" evidence="36">
    <location>
        <begin position="123"/>
        <end position="125"/>
    </location>
</feature>
<feature type="strand" evidence="33">
    <location>
        <begin position="127"/>
        <end position="129"/>
    </location>
</feature>
<feature type="strand" evidence="36">
    <location>
        <begin position="131"/>
        <end position="134"/>
    </location>
</feature>
<feature type="strand" evidence="36">
    <location>
        <begin position="139"/>
        <end position="141"/>
    </location>
</feature>
<feature type="turn" evidence="36">
    <location>
        <begin position="142"/>
        <end position="144"/>
    </location>
</feature>
<feature type="strand" evidence="35">
    <location>
        <begin position="146"/>
        <end position="148"/>
    </location>
</feature>
<keyword id="KW-0002">3D-structure</keyword>
<keyword id="KW-0007">Acetylation</keyword>
<keyword id="KW-0013">ADP-ribosylation</keyword>
<keyword id="KW-0963">Cytoplasm</keyword>
<keyword id="KW-0903">Direct protein sequencing</keyword>
<keyword id="KW-1017">Isopeptide bond</keyword>
<keyword id="KW-0479">Metal-binding</keyword>
<keyword id="KW-0539">Nucleus</keyword>
<keyword id="KW-0597">Phosphoprotein</keyword>
<keyword id="KW-1267">Proteomics identification</keyword>
<keyword id="KW-1185">Reference proteome</keyword>
<keyword id="KW-0687">Ribonucleoprotein</keyword>
<keyword id="KW-0689">Ribosomal protein</keyword>
<keyword id="KW-0832">Ubl conjugation</keyword>
<keyword id="KW-0862">Zinc</keyword>
<keyword id="KW-0863">Zinc-finger</keyword>
<reference key="1">
    <citation type="journal article" date="1991" name="Eur. J. Immunol.">
        <title>Effect of ubiquitin on platelet functions: possible identity with platelet activity suppressive lymphokine (PASL).</title>
        <authorList>
            <person name="Pancre V."/>
            <person name="Pierce R.J."/>
            <person name="Fournier F."/>
            <person name="Mehtali M."/>
            <person name="Delanoye A."/>
            <person name="Capron A."/>
            <person name="Auriault C."/>
        </authorList>
    </citation>
    <scope>NUCLEOTIDE SEQUENCE [MRNA]</scope>
</reference>
<reference key="2">
    <citation type="journal article" date="1992" name="Br. J. Cancer">
        <title>Differential expression of translation-associated genes in benign and malignant human breast tumours.</title>
        <authorList>
            <person name="Adams S.M."/>
            <person name="Sharp M.G."/>
            <person name="Walker R.A."/>
            <person name="Brammar W.J."/>
            <person name="Varley J.M."/>
        </authorList>
    </citation>
    <scope>NUCLEOTIDE SEQUENCE [MRNA]</scope>
</reference>
<reference key="3">
    <citation type="journal article" date="2005" name="Nature">
        <title>Generation and annotation of the DNA sequences of human chromosomes 2 and 4.</title>
        <authorList>
            <person name="Hillier L.W."/>
            <person name="Graves T.A."/>
            <person name="Fulton R.S."/>
            <person name="Fulton L.A."/>
            <person name="Pepin K.H."/>
            <person name="Minx P."/>
            <person name="Wagner-McPherson C."/>
            <person name="Layman D."/>
            <person name="Wylie K."/>
            <person name="Sekhon M."/>
            <person name="Becker M.C."/>
            <person name="Fewell G.A."/>
            <person name="Delehaunty K.D."/>
            <person name="Miner T.L."/>
            <person name="Nash W.E."/>
            <person name="Kremitzki C."/>
            <person name="Oddy L."/>
            <person name="Du H."/>
            <person name="Sun H."/>
            <person name="Bradshaw-Cordum H."/>
            <person name="Ali J."/>
            <person name="Carter J."/>
            <person name="Cordes M."/>
            <person name="Harris A."/>
            <person name="Isak A."/>
            <person name="van Brunt A."/>
            <person name="Nguyen C."/>
            <person name="Du F."/>
            <person name="Courtney L."/>
            <person name="Kalicki J."/>
            <person name="Ozersky P."/>
            <person name="Abbott S."/>
            <person name="Armstrong J."/>
            <person name="Belter E.A."/>
            <person name="Caruso L."/>
            <person name="Cedroni M."/>
            <person name="Cotton M."/>
            <person name="Davidson T."/>
            <person name="Desai A."/>
            <person name="Elliott G."/>
            <person name="Erb T."/>
            <person name="Fronick C."/>
            <person name="Gaige T."/>
            <person name="Haakenson W."/>
            <person name="Haglund K."/>
            <person name="Holmes A."/>
            <person name="Harkins R."/>
            <person name="Kim K."/>
            <person name="Kruchowski S.S."/>
            <person name="Strong C.M."/>
            <person name="Grewal N."/>
            <person name="Goyea E."/>
            <person name="Hou S."/>
            <person name="Levy A."/>
            <person name="Martinka S."/>
            <person name="Mead K."/>
            <person name="McLellan M.D."/>
            <person name="Meyer R."/>
            <person name="Randall-Maher J."/>
            <person name="Tomlinson C."/>
            <person name="Dauphin-Kohlberg S."/>
            <person name="Kozlowicz-Reilly A."/>
            <person name="Shah N."/>
            <person name="Swearengen-Shahid S."/>
            <person name="Snider J."/>
            <person name="Strong J.T."/>
            <person name="Thompson J."/>
            <person name="Yoakum M."/>
            <person name="Leonard S."/>
            <person name="Pearman C."/>
            <person name="Trani L."/>
            <person name="Radionenko M."/>
            <person name="Waligorski J.E."/>
            <person name="Wang C."/>
            <person name="Rock S.M."/>
            <person name="Tin-Wollam A.-M."/>
            <person name="Maupin R."/>
            <person name="Latreille P."/>
            <person name="Wendl M.C."/>
            <person name="Yang S.-P."/>
            <person name="Pohl C."/>
            <person name="Wallis J.W."/>
            <person name="Spieth J."/>
            <person name="Bieri T.A."/>
            <person name="Berkowicz N."/>
            <person name="Nelson J.O."/>
            <person name="Osborne J."/>
            <person name="Ding L."/>
            <person name="Meyer R."/>
            <person name="Sabo A."/>
            <person name="Shotland Y."/>
            <person name="Sinha P."/>
            <person name="Wohldmann P.E."/>
            <person name="Cook L.L."/>
            <person name="Hickenbotham M.T."/>
            <person name="Eldred J."/>
            <person name="Williams D."/>
            <person name="Jones T.A."/>
            <person name="She X."/>
            <person name="Ciccarelli F.D."/>
            <person name="Izaurralde E."/>
            <person name="Taylor J."/>
            <person name="Schmutz J."/>
            <person name="Myers R.M."/>
            <person name="Cox D.R."/>
            <person name="Huang X."/>
            <person name="McPherson J.D."/>
            <person name="Mardis E.R."/>
            <person name="Clifton S.W."/>
            <person name="Warren W.C."/>
            <person name="Chinwalla A.T."/>
            <person name="Eddy S.R."/>
            <person name="Marra M.A."/>
            <person name="Ovcharenko I."/>
            <person name="Furey T.S."/>
            <person name="Miller W."/>
            <person name="Eichler E.E."/>
            <person name="Bork P."/>
            <person name="Suyama M."/>
            <person name="Torrents D."/>
            <person name="Waterston R.H."/>
            <person name="Wilson R.K."/>
        </authorList>
    </citation>
    <scope>NUCLEOTIDE SEQUENCE [LARGE SCALE GENOMIC DNA]</scope>
</reference>
<reference key="4">
    <citation type="journal article" date="2004" name="Genome Res.">
        <title>The status, quality, and expansion of the NIH full-length cDNA project: the Mammalian Gene Collection (MGC).</title>
        <authorList>
            <consortium name="The MGC Project Team"/>
        </authorList>
    </citation>
    <scope>NUCLEOTIDE SEQUENCE [LARGE SCALE MRNA]</scope>
    <source>
        <tissue>Placenta</tissue>
        <tissue>Skin</tissue>
    </source>
</reference>
<reference key="5">
    <citation type="journal article" date="1996" name="Eur. J. Biochem.">
        <title>Characterization of the human small-ribosomal-subunit proteins by N-terminal and internal sequencing, and mass spectrometry.</title>
        <authorList>
            <person name="Vladimirov S.N."/>
            <person name="Ivanov A.V."/>
            <person name="Karpova G.G."/>
            <person name="Musolyamov A.K."/>
            <person name="Egorov T.A."/>
            <person name="Thiede B."/>
            <person name="Wittmann-Liebold B."/>
            <person name="Otto A."/>
        </authorList>
    </citation>
    <scope>PROTEIN SEQUENCE OF 1-98</scope>
    <source>
        <tissue>Placenta</tissue>
    </source>
</reference>
<reference key="6">
    <citation type="journal article" date="1975" name="Nature">
        <title>Molecular conservation of 74 amino acid sequence of ubiquitin between cattle and man.</title>
        <authorList>
            <person name="Schlesinger D.H."/>
            <person name="Goldstein G."/>
        </authorList>
    </citation>
    <scope>PROTEIN SEQUENCE OF 1-74</scope>
</reference>
<reference key="7">
    <citation type="submission" date="2008-12" db="UniProtKB">
        <authorList>
            <person name="Lubec G."/>
            <person name="Chen W.-Q."/>
            <person name="Sun Y."/>
        </authorList>
    </citation>
    <scope>PROTEIN SEQUENCE OF 1-27; 30-42 AND 55-72</scope>
    <scope>IDENTIFICATION BY MASS SPECTROMETRY</scope>
    <source>
        <tissue>Fetal brain cortex</tissue>
    </source>
</reference>
<reference key="8">
    <citation type="journal article" date="2006" name="J. Biol. Chem.">
        <title>Alzheimer disease-specific conformation of hyperphosphorylated paired helical filament-tau is polyubiquitinated through Lys-48, Lys-11, and Lys-6 ubiquitin conjugation.</title>
        <authorList>
            <person name="Cripps D."/>
            <person name="Thomas S.N."/>
            <person name="Jeng Y."/>
            <person name="Yang F."/>
            <person name="Davies P."/>
            <person name="Yang A.J."/>
        </authorList>
    </citation>
    <scope>PROTEIN SEQUENCE OF 1-27 AND 43-54</scope>
    <scope>UBIQUITINATION AT LYS-6; LYS-11 AND LYS-48</scope>
    <scope>IDENTIFICATION BY MASS SPECTROMETRY</scope>
</reference>
<reference key="9">
    <citation type="journal article" date="2002" name="Genome Res.">
        <title>The human ribosomal protein genes: sequencing and comparative analysis of 73 genes.</title>
        <authorList>
            <person name="Yoshihama M."/>
            <person name="Uechi T."/>
            <person name="Asakawa S."/>
            <person name="Kawasaki K."/>
            <person name="Kato S."/>
            <person name="Higa S."/>
            <person name="Maeda N."/>
            <person name="Minoshima S."/>
            <person name="Tanaka T."/>
            <person name="Shimizu N."/>
            <person name="Kenmochi N."/>
        </authorList>
    </citation>
    <scope>NUCLEOTIDE SEQUENCE [GENOMIC DNA] OF 1-34</scope>
</reference>
<reference key="10">
    <citation type="journal article" date="1985" name="J. Biol. Chem.">
        <title>Nucleotide sequence analysis of a cDNA encoding human ubiquitin reveals that ubiquitin is synthesized as a precursor.</title>
        <authorList>
            <person name="Lund P.K."/>
            <person name="Moats-Staats B.M."/>
            <person name="Simmons J.G."/>
            <person name="Hoyt E."/>
            <person name="D'Ercole A.J."/>
            <person name="Martin F."/>
            <person name="van Wyk J.J."/>
        </authorList>
    </citation>
    <scope>NUCLEOTIDE SEQUENCE [MRNA] OF 5-156</scope>
</reference>
<reference key="11">
    <citation type="journal article" date="1998" name="Genome Res.">
        <title>A map of 75 human ribosomal protein genes.</title>
        <authorList>
            <person name="Kenmochi N."/>
            <person name="Kawaguchi T."/>
            <person name="Rozen S."/>
            <person name="Davis E."/>
            <person name="Goodman N."/>
            <person name="Hudson T.J."/>
            <person name="Tanaka T."/>
            <person name="Page D.C."/>
        </authorList>
    </citation>
    <scope>NUCLEOTIDE SEQUENCE [GENOMIC DNA] OF 98-148</scope>
</reference>
<reference key="12">
    <citation type="journal article" date="2006" name="Mol. Cell">
        <title>Differential regulation of EGF receptor internalization and degradation by multiubiquitination within the kinase domain.</title>
        <authorList>
            <person name="Huang F."/>
            <person name="Kirkpatrick D."/>
            <person name="Jiang X."/>
            <person name="Gygi S.P."/>
            <person name="Sorkin A."/>
        </authorList>
    </citation>
    <scope>FUNCTION</scope>
    <scope>UBIQUITINATION AT LYS-11; LYS-29; LYS-48 AND LYS-63</scope>
    <scope>IDENTIFICATION BY MASS SPECTROMETRY</scope>
</reference>
<reference key="13">
    <citation type="journal article" date="2004" name="J. Biol. Chem.">
        <title>Functional regulation of FEZ1 by the U-box-type ubiquitin ligase E4B contributes to neuritogenesis.</title>
        <authorList>
            <person name="Okumura F."/>
            <person name="Hatakeyama S."/>
            <person name="Matsumoto M."/>
            <person name="Kamura T."/>
            <person name="Nakayama K."/>
        </authorList>
    </citation>
    <scope>UBIQUITINATION AT LYS-27</scope>
</reference>
<reference key="14">
    <citation type="journal article" date="2008" name="Proc. Natl. Acad. Sci. U.S.A.">
        <title>Polyubiquitination of proliferating cell nuclear antigen by HLTF and SHPRH prevents genomic instability from stalled replication forks.</title>
        <authorList>
            <person name="Motegi A."/>
            <person name="Liaw H.-J."/>
            <person name="Lee K.-Y."/>
            <person name="Roest H.P."/>
            <person name="Maas A."/>
            <person name="Wu X."/>
            <person name="Moinova H."/>
            <person name="Markowitz S.D."/>
            <person name="Ding H."/>
            <person name="Hoeijmakers J.H.J."/>
            <person name="Myung K."/>
        </authorList>
    </citation>
    <scope>UBIQUITINATION AT LYS-63</scope>
    <scope>MUTAGENESIS OF LYS-48 AND LYS-63</scope>
</reference>
<reference key="15">
    <citation type="journal article" date="2009" name="Biochem. Soc. Trans.">
        <title>The emerging complexity of protein ubiquitination.</title>
        <authorList>
            <person name="Komander D."/>
        </authorList>
    </citation>
    <scope>REVIEW</scope>
    <scope>FUNCTION</scope>
</reference>
<reference key="16">
    <citation type="journal article" date="2009" name="Science">
        <title>Lysine acetylation targets protein complexes and co-regulates major cellular functions.</title>
        <authorList>
            <person name="Choudhary C."/>
            <person name="Kumar C."/>
            <person name="Gnad F."/>
            <person name="Nielsen M.L."/>
            <person name="Rehman M."/>
            <person name="Walther T.C."/>
            <person name="Olsen J.V."/>
            <person name="Mann M."/>
        </authorList>
    </citation>
    <scope>ACETYLATION [LARGE SCALE ANALYSIS] AT LYS-104 AND LYS-113</scope>
    <scope>IDENTIFICATION BY MASS SPECTROMETRY [LARGE SCALE ANALYSIS]</scope>
</reference>
<reference key="17">
    <citation type="journal article" date="2011" name="BMC Syst. Biol.">
        <title>Initial characterization of the human central proteome.</title>
        <authorList>
            <person name="Burkard T.R."/>
            <person name="Planyavsky M."/>
            <person name="Kaupe I."/>
            <person name="Breitwieser F.P."/>
            <person name="Buerckstuemmer T."/>
            <person name="Bennett K.L."/>
            <person name="Superti-Furga G."/>
            <person name="Colinge J."/>
        </authorList>
    </citation>
    <scope>IDENTIFICATION BY MASS SPECTROMETRY [LARGE SCALE ANALYSIS]</scope>
</reference>
<reference key="18">
    <citation type="journal article" date="2014" name="Biochem. J.">
        <title>Parkin is activated by PINK1-dependent phosphorylation of ubiquitin at Ser65.</title>
        <authorList>
            <person name="Kazlauskaite A."/>
            <person name="Kondapalli C."/>
            <person name="Gourlay R."/>
            <person name="Campbell D.G."/>
            <person name="Ritorto M.S."/>
            <person name="Hofmann K."/>
            <person name="Alessi D.R."/>
            <person name="Knebel A."/>
            <person name="Trost M."/>
            <person name="Muqit M.M."/>
        </authorList>
    </citation>
    <scope>PHOSPHORYLATION AT SER-65</scope>
    <scope>MUTAGENESIS OF SER-65</scope>
</reference>
<reference key="19">
    <citation type="journal article" date="2014" name="Curr. Opin. Struct. Biol.">
        <title>A new system for naming ribosomal proteins.</title>
        <authorList>
            <person name="Ban N."/>
            <person name="Beckmann R."/>
            <person name="Cate J.H.D."/>
            <person name="Dinman J.D."/>
            <person name="Dragon F."/>
            <person name="Ellis S.R."/>
            <person name="Lafontaine D.L.J."/>
            <person name="Lindahl L."/>
            <person name="Liljas A."/>
            <person name="Lipton J.M."/>
            <person name="McAlear M.A."/>
            <person name="Moore P.B."/>
            <person name="Noller H.F."/>
            <person name="Ortega J."/>
            <person name="Panse V.G."/>
            <person name="Ramakrishnan V."/>
            <person name="Spahn C.M.T."/>
            <person name="Steitz T.A."/>
            <person name="Tchorzewski M."/>
            <person name="Tollervey D."/>
            <person name="Warren A.J."/>
            <person name="Williamson J.R."/>
            <person name="Wilson D."/>
            <person name="Yonath A."/>
            <person name="Yusupov M."/>
        </authorList>
    </citation>
    <scope>NOMENCLATURE</scope>
</reference>
<reference key="20">
    <citation type="journal article" date="2014" name="J. Cell Biol.">
        <title>PINK1 phosphorylates ubiquitin to activate Parkin E3 ubiquitin ligase activity.</title>
        <authorList>
            <person name="Kane L.A."/>
            <person name="Lazarou M."/>
            <person name="Fogel A.I."/>
            <person name="Li Y."/>
            <person name="Yamano K."/>
            <person name="Sarraf S.A."/>
            <person name="Banerjee S."/>
            <person name="Youle R.J."/>
        </authorList>
    </citation>
    <scope>PHOSPHORYLATION AT SER-65</scope>
    <scope>MUTAGENESIS OF SER-65</scope>
</reference>
<reference key="21">
    <citation type="journal article" date="2014" name="Nature">
        <title>Ubiquitin is phosphorylated by PINK1 to activate parkin.</title>
        <authorList>
            <person name="Koyano F."/>
            <person name="Okatsu K."/>
            <person name="Kosako H."/>
            <person name="Tamura Y."/>
            <person name="Go E."/>
            <person name="Kimura M."/>
            <person name="Kimura Y."/>
            <person name="Tsuchiya H."/>
            <person name="Yoshihara H."/>
            <person name="Hirokawa T."/>
            <person name="Endo T."/>
            <person name="Fon E.A."/>
            <person name="Trempe J.F."/>
            <person name="Saeki Y."/>
            <person name="Tanaka K."/>
            <person name="Matsuda N."/>
        </authorList>
    </citation>
    <scope>PHOSPHORYLATION AT SER-65</scope>
    <scope>MUTAGENESIS OF SER-65</scope>
</reference>
<reference key="22">
    <citation type="journal article" date="2014" name="PLoS Genet.">
        <title>Phosphorylation of mitochondrial polyubiquitin by PINK1 promotes Parkin mitochondrial tethering.</title>
        <authorList>
            <person name="Shiba-Fukushima K."/>
            <person name="Arano T."/>
            <person name="Matsumoto G."/>
            <person name="Inoshita T."/>
            <person name="Yoshida S."/>
            <person name="Ishihama Y."/>
            <person name="Ryu K.Y."/>
            <person name="Nukina N."/>
            <person name="Hattori N."/>
            <person name="Imai Y."/>
        </authorList>
    </citation>
    <scope>PHOSPHORYLATION AT SER-65</scope>
    <scope>MUTAGENESIS OF SER-65</scope>
</reference>
<reference key="23">
    <citation type="journal article" date="2015" name="EMBO J.">
        <title>Ubiquitin Ser65 phosphorylation affects ubiquitin structure, chain assembly and hydrolysis.</title>
        <authorList>
            <person name="Wauer T."/>
            <person name="Swatek K.N."/>
            <person name="Wagstaff J.L."/>
            <person name="Gladkova C."/>
            <person name="Pruneda J.N."/>
            <person name="Michel M.A."/>
            <person name="Gersch M."/>
            <person name="Johnson C.M."/>
            <person name="Freund S.M."/>
            <person name="Komander D."/>
        </authorList>
    </citation>
    <scope>PHOSPHORYLATION AT SER-65</scope>
</reference>
<reference key="24">
    <citation type="journal article" date="2015" name="Proteomics">
        <title>N-terminome analysis of the human mitochondrial proteome.</title>
        <authorList>
            <person name="Vaca Jacome A.S."/>
            <person name="Rabilloud T."/>
            <person name="Schaeffer-Reiss C."/>
            <person name="Rompais M."/>
            <person name="Ayoub D."/>
            <person name="Lane L."/>
            <person name="Bairoch A."/>
            <person name="Van Dorsselaer A."/>
            <person name="Carapito C."/>
        </authorList>
    </citation>
    <scope>IDENTIFICATION BY MASS SPECTROMETRY [LARGE SCALE ANALYSIS]</scope>
</reference>
<reference key="25">
    <citation type="journal article" date="2017" name="Mol. Cell">
        <title>Ubiquitin Modification by the E3 Ligase/ADP-Ribosyltransferase Dtx3L/Parp9.</title>
        <authorList>
            <person name="Yang C.S."/>
            <person name="Jividen K."/>
            <person name="Spencer A."/>
            <person name="Dworak N."/>
            <person name="Ni L."/>
            <person name="Oostdyk L.T."/>
            <person name="Chatterjee M."/>
            <person name="Kusmider B."/>
            <person name="Reon B."/>
            <person name="Parlak M."/>
            <person name="Gorbunova V."/>
            <person name="Abbas T."/>
            <person name="Jeffery E."/>
            <person name="Sherman N.E."/>
            <person name="Paschal B.M."/>
        </authorList>
    </citation>
    <scope>ADP-RIBOSYLATION AT GLY-76</scope>
    <scope>MUTAGENESIS OF HIS-68; ARG-72; ARG-74 AND GLY-76</scope>
</reference>
<reference key="26">
    <citation type="journal article" date="2020" name="Mol. Cell">
        <title>Threonine ADP-ribosylation of ubiquitin by a bacterial effector family blocks host ubiquitination.</title>
        <authorList>
            <person name="Yan F."/>
            <person name="Huang C."/>
            <person name="Wang X."/>
            <person name="Tan J."/>
            <person name="Cheng S."/>
            <person name="Wan M."/>
            <person name="Wang Z."/>
            <person name="Wang S."/>
            <person name="Luo S."/>
            <person name="Li A."/>
            <person name="Guo X."/>
            <person name="Feng M."/>
            <person name="Liu X."/>
            <person name="Zhu Y."/>
            <person name="Zhou Y."/>
        </authorList>
    </citation>
    <scope>ADP-RIBOSYLATION AT THR-66 (MICROBIAL INFECTION)</scope>
</reference>
<reference key="27">
    <citation type="journal article" date="2020" name="Elife">
        <title>USP16 counteracts mono-ubiquitination of RPS27a and promotes maturation of the 40S ribosomal subunit.</title>
        <authorList>
            <person name="Montellese C."/>
            <person name="van den Heuvel J."/>
            <person name="Ashiono C."/>
            <person name="Doerner K."/>
            <person name="Melnik A."/>
            <person name="Jonas S."/>
            <person name="Zemp I."/>
            <person name="Picotti P."/>
            <person name="Gillet L.C."/>
            <person name="Kutay U."/>
        </authorList>
    </citation>
    <scope>UBIQUITINATION AT LYS-113 (40S RIBOSOMAL PROTEIN S27A)</scope>
    <scope>MUTAGENESIS OF LYS-113</scope>
</reference>
<reference key="28">
    <citation type="journal article" date="2021" name="Nat. Chem. Biol.">
        <title>K29-linked ubiquitin signaling regulates proteotoxic stress response and cell cycle.</title>
        <authorList>
            <person name="Yu Y."/>
            <person name="Zheng Q."/>
            <person name="Erramilli S.K."/>
            <person name="Pan M."/>
            <person name="Park S."/>
            <person name="Xie Y."/>
            <person name="Li J."/>
            <person name="Fei J."/>
            <person name="Kossiakoff A.A."/>
            <person name="Liu L."/>
            <person name="Zhao M."/>
        </authorList>
    </citation>
    <scope>FUNCTION (UBIQUITIN)</scope>
    <scope>UBIQUITINATION AT LYS-29</scope>
</reference>
<reference key="29">
    <citation type="journal article" date="2023" name="Cell">
        <title>An E3 ligase network engages GCN1 to promote the degradation of translation factors on stalled ribosomes.</title>
        <authorList>
            <person name="Oltion K."/>
            <person name="Carelli J.D."/>
            <person name="Yang T."/>
            <person name="See S.K."/>
            <person name="Wang H.Y."/>
            <person name="Kampmann M."/>
            <person name="Taunton J."/>
        </authorList>
    </citation>
    <scope>UBIQUITINATION AT LYS-107 AND LYS-113 (40S RIBOSOMAL PROTEIN S27A)</scope>
    <scope>MUTAGENESIS OF LYS-107 AND LYS-113</scope>
</reference>
<reference key="30">
    <citation type="journal article" date="2015" name="Mol. Cell">
        <title>K29-selective ubiquitin binding domain reveals structural basis of specificity and heterotypic nature of K29 polyubiquitin.</title>
        <authorList>
            <person name="Kristariyanto Y.A."/>
            <person name="Abdul Rehman S.A."/>
            <person name="Campbell D.G."/>
            <person name="Morrice N.A."/>
            <person name="Johnson C."/>
            <person name="Toth R."/>
            <person name="Kulathu Y."/>
        </authorList>
    </citation>
    <scope>X-RAY CRYSTALLOGRAPHY (3.03 ANGSTROMS) OF 1-76 IN COMPLEX WITH ZRANB1</scope>
    <scope>UBIQUITINATION AT LYS-29</scope>
</reference>
<reference key="31">
    <citation type="journal article" date="2015" name="Mol. Cell">
        <title>Assembly and specific recognition of K29- and K33-linked polyubiquitin.</title>
        <authorList>
            <person name="Michel M.A."/>
            <person name="Elliott P.R."/>
            <person name="Swatek K.N."/>
            <person name="Simicek M."/>
            <person name="Pruneda J.N."/>
            <person name="Wagstaff J.L."/>
            <person name="Freund S.M."/>
            <person name="Komander D."/>
        </authorList>
    </citation>
    <scope>X-RAY CRYSTALLOGRAPHY (1.68 ANGSTROMS) OF 1-76 IN COMPLEX WITH ZRANB1</scope>
    <scope>UBIQUITINATION AT LYS-29 AND LYS-33</scope>
</reference>
<reference evidence="28 29" key="32">
    <citation type="journal article" date="2021" name="Science">
        <title>Nucleolar maturation of the human small subunit processome.</title>
        <authorList>
            <person name="Singh S."/>
            <person name="Vanden Broeck A."/>
            <person name="Miller L."/>
            <person name="Chaker-Margot M."/>
            <person name="Klinge S."/>
        </authorList>
    </citation>
    <scope>STRUCTURE BY ELECTRON MICROSCOPY (2.70 ANGSTROMS)</scope>
    <scope>FUNCTION</scope>
    <scope>SUBCELLULAR LOCATION</scope>
    <scope>SUBUNIT</scope>
</reference>
<reference key="33">
    <citation type="journal article" date="2013" name="Nature">
        <title>Structures of the human and Drosophila 80S ribosome.</title>
        <authorList>
            <person name="Anger A.M."/>
            <person name="Armache J.P."/>
            <person name="Berninghausen O."/>
            <person name="Habeck M."/>
            <person name="Subklewe M."/>
            <person name="Wilson D.N."/>
            <person name="Beckmann R."/>
        </authorList>
    </citation>
    <scope>STRUCTURE BY ELECTRON MICROSCOPY (5.0 ANGSTROMS) OF 77-156MSYS</scope>
    <scope>SUBCELLULAR LOCATION</scope>
    <scope>SUBUNIT</scope>
</reference>
<dbReference type="EMBL" id="X63237">
    <property type="protein sequence ID" value="CAA44911.1"/>
    <property type="molecule type" value="mRNA"/>
</dbReference>
<dbReference type="EMBL" id="S79522">
    <property type="protein sequence ID" value="AAB21188.1"/>
    <property type="molecule type" value="mRNA"/>
</dbReference>
<dbReference type="EMBL" id="AC012358">
    <property type="status" value="NOT_ANNOTATED_CDS"/>
    <property type="molecule type" value="Genomic_DNA"/>
</dbReference>
<dbReference type="EMBL" id="BC001392">
    <property type="protein sequence ID" value="AAH01392.1"/>
    <property type="molecule type" value="mRNA"/>
</dbReference>
<dbReference type="EMBL" id="BC066293">
    <property type="protein sequence ID" value="AAH66293.1"/>
    <property type="molecule type" value="mRNA"/>
</dbReference>
<dbReference type="EMBL" id="AB062071">
    <property type="protein sequence ID" value="BAB79490.1"/>
    <property type="molecule type" value="Genomic_DNA"/>
</dbReference>
<dbReference type="EMBL" id="M10939">
    <property type="protein sequence ID" value="AAA36788.1"/>
    <property type="molecule type" value="mRNA"/>
</dbReference>
<dbReference type="EMBL" id="AB007163">
    <property type="protein sequence ID" value="BAA25826.1"/>
    <property type="molecule type" value="Genomic_DNA"/>
</dbReference>
<dbReference type="CCDS" id="CCDS33202.1"/>
<dbReference type="RefSeq" id="NP_001129064.1">
    <property type="nucleotide sequence ID" value="NM_001135592.2"/>
</dbReference>
<dbReference type="RefSeq" id="NP_001170884.1">
    <property type="nucleotide sequence ID" value="NM_001177413.1"/>
</dbReference>
<dbReference type="RefSeq" id="NP_002945.1">
    <property type="nucleotide sequence ID" value="NM_002954.6"/>
</dbReference>
<dbReference type="PDB" id="2KHW">
    <property type="method" value="NMR"/>
    <property type="chains" value="B=1-76"/>
</dbReference>
<dbReference type="PDB" id="2KOX">
    <property type="method" value="NMR"/>
    <property type="chains" value="A=1-76"/>
</dbReference>
<dbReference type="PDB" id="2KTF">
    <property type="method" value="NMR"/>
    <property type="chains" value="A=1-76"/>
</dbReference>
<dbReference type="PDB" id="2KWU">
    <property type="method" value="NMR"/>
    <property type="chains" value="B=1-76"/>
</dbReference>
<dbReference type="PDB" id="2KWV">
    <property type="method" value="NMR"/>
    <property type="chains" value="B=1-76"/>
</dbReference>
<dbReference type="PDB" id="2L0F">
    <property type="method" value="NMR"/>
    <property type="chains" value="A=1-76"/>
</dbReference>
<dbReference type="PDB" id="2L0T">
    <property type="method" value="NMR"/>
    <property type="chains" value="A=1-76"/>
</dbReference>
<dbReference type="PDB" id="2XK5">
    <property type="method" value="X-ray"/>
    <property type="resolution" value="3.00 A"/>
    <property type="chains" value="A/B=1-76"/>
</dbReference>
<dbReference type="PDB" id="3AXC">
    <property type="method" value="X-ray"/>
    <property type="resolution" value="2.19 A"/>
    <property type="chains" value="A=1-76"/>
</dbReference>
<dbReference type="PDB" id="3I3T">
    <property type="method" value="X-ray"/>
    <property type="resolution" value="2.59 A"/>
    <property type="chains" value="B/D/F/H=1-75"/>
</dbReference>
<dbReference type="PDB" id="3K9P">
    <property type="method" value="X-ray"/>
    <property type="resolution" value="2.80 A"/>
    <property type="chains" value="B=1-76"/>
</dbReference>
<dbReference type="PDB" id="3N30">
    <property type="method" value="X-ray"/>
    <property type="resolution" value="3.00 A"/>
    <property type="chains" value="A/B=1-76"/>
</dbReference>
<dbReference type="PDB" id="3N32">
    <property type="method" value="X-ray"/>
    <property type="resolution" value="1.80 A"/>
    <property type="chains" value="A=1-76"/>
</dbReference>
<dbReference type="PDB" id="3NHE">
    <property type="method" value="X-ray"/>
    <property type="resolution" value="1.26 A"/>
    <property type="chains" value="B=1-76"/>
</dbReference>
<dbReference type="PDB" id="3NOB">
    <property type="method" value="X-ray"/>
    <property type="resolution" value="2.19 A"/>
    <property type="chains" value="A/B/C/D/E/F/G/H=1-76"/>
</dbReference>
<dbReference type="PDB" id="3NS8">
    <property type="method" value="X-ray"/>
    <property type="resolution" value="1.71 A"/>
    <property type="chains" value="A/B=1-76"/>
</dbReference>
<dbReference type="PDB" id="3PHD">
    <property type="method" value="X-ray"/>
    <property type="resolution" value="3.00 A"/>
    <property type="chains" value="E/F/G/H=1-76"/>
</dbReference>
<dbReference type="PDB" id="3PHW">
    <property type="method" value="X-ray"/>
    <property type="resolution" value="2.00 A"/>
    <property type="chains" value="B/D/F/H=1-75"/>
</dbReference>
<dbReference type="PDB" id="3TBL">
    <property type="method" value="X-ray"/>
    <property type="resolution" value="2.90 A"/>
    <property type="chains" value="D/E=1-76"/>
</dbReference>
<dbReference type="PDB" id="3VDZ">
    <property type="method" value="X-ray"/>
    <property type="resolution" value="2.40 A"/>
    <property type="chains" value="A/B=1-76"/>
</dbReference>
<dbReference type="PDB" id="4R62">
    <property type="method" value="X-ray"/>
    <property type="resolution" value="2.28 A"/>
    <property type="chains" value="B=1-76"/>
</dbReference>
<dbReference type="PDB" id="4UG0">
    <property type="method" value="EM"/>
    <property type="chains" value="Sf=1-156"/>
</dbReference>
<dbReference type="PDB" id="4V6X">
    <property type="method" value="EM"/>
    <property type="resolution" value="5.00 A"/>
    <property type="chains" value="Af=77-156"/>
</dbReference>
<dbReference type="PDB" id="5A2Q">
    <property type="method" value="EM"/>
    <property type="resolution" value="3.90 A"/>
    <property type="chains" value="f=78-149"/>
</dbReference>
<dbReference type="PDB" id="5AJ0">
    <property type="method" value="EM"/>
    <property type="resolution" value="3.50 A"/>
    <property type="chains" value="Bf=1-156"/>
</dbReference>
<dbReference type="PDB" id="5FLX">
    <property type="method" value="EM"/>
    <property type="resolution" value="3.90 A"/>
    <property type="chains" value="f=1-156"/>
</dbReference>
<dbReference type="PDB" id="5LKS">
    <property type="method" value="EM"/>
    <property type="resolution" value="3.60 A"/>
    <property type="chains" value="Sf=1-156"/>
</dbReference>
<dbReference type="PDB" id="5T2C">
    <property type="method" value="EM"/>
    <property type="resolution" value="3.60 A"/>
    <property type="chains" value="AH=1-156"/>
</dbReference>
<dbReference type="PDB" id="5WVO">
    <property type="method" value="X-ray"/>
    <property type="resolution" value="2.00 A"/>
    <property type="chains" value="A/B=1-76"/>
</dbReference>
<dbReference type="PDB" id="5YDK">
    <property type="method" value="X-ray"/>
    <property type="resolution" value="2.50 A"/>
    <property type="chains" value="B/E/H/K=1-76, C/D/I/J=1-77"/>
</dbReference>
<dbReference type="PDB" id="6DC6">
    <property type="method" value="X-ray"/>
    <property type="resolution" value="3.14 A"/>
    <property type="chains" value="B/D=1-76"/>
</dbReference>
<dbReference type="PDB" id="6FEC">
    <property type="method" value="EM"/>
    <property type="resolution" value="6.30 A"/>
    <property type="chains" value="p=82-152"/>
</dbReference>
<dbReference type="PDB" id="6G18">
    <property type="method" value="EM"/>
    <property type="resolution" value="3.60 A"/>
    <property type="chains" value="f=1-156"/>
</dbReference>
<dbReference type="PDB" id="6G51">
    <property type="method" value="EM"/>
    <property type="resolution" value="4.10 A"/>
    <property type="chains" value="f=1-156"/>
</dbReference>
<dbReference type="PDB" id="6G53">
    <property type="method" value="EM"/>
    <property type="resolution" value="4.50 A"/>
    <property type="chains" value="f=1-156"/>
</dbReference>
<dbReference type="PDB" id="6G5H">
    <property type="method" value="EM"/>
    <property type="resolution" value="3.60 A"/>
    <property type="chains" value="f=1-156"/>
</dbReference>
<dbReference type="PDB" id="6G5I">
    <property type="method" value="EM"/>
    <property type="resolution" value="3.50 A"/>
    <property type="chains" value="f=1-156"/>
</dbReference>
<dbReference type="PDB" id="6IP5">
    <property type="method" value="EM"/>
    <property type="resolution" value="3.90 A"/>
    <property type="chains" value="3R=1-156"/>
</dbReference>
<dbReference type="PDB" id="6IP6">
    <property type="method" value="EM"/>
    <property type="resolution" value="4.50 A"/>
    <property type="chains" value="3R=1-156"/>
</dbReference>
<dbReference type="PDB" id="6IP8">
    <property type="method" value="EM"/>
    <property type="resolution" value="3.90 A"/>
    <property type="chains" value="3R=1-156"/>
</dbReference>
<dbReference type="PDB" id="6J99">
    <property type="method" value="EM"/>
    <property type="resolution" value="4.10 A"/>
    <property type="chains" value="L=1-76"/>
</dbReference>
<dbReference type="PDB" id="6KFP">
    <property type="method" value="X-ray"/>
    <property type="resolution" value="2.92 A"/>
    <property type="chains" value="D=1-76"/>
</dbReference>
<dbReference type="PDB" id="6KG6">
    <property type="method" value="X-ray"/>
    <property type="resolution" value="2.39 A"/>
    <property type="chains" value="C=1-76"/>
</dbReference>
<dbReference type="PDB" id="6KIU">
    <property type="method" value="EM"/>
    <property type="resolution" value="3.20 A"/>
    <property type="chains" value="O=1-76"/>
</dbReference>
<dbReference type="PDB" id="6KIV">
    <property type="method" value="EM"/>
    <property type="resolution" value="4.00 A"/>
    <property type="chains" value="O=1-76"/>
</dbReference>
<dbReference type="PDB" id="6KIW">
    <property type="method" value="EM"/>
    <property type="resolution" value="4.00 A"/>
    <property type="chains" value="O=1-76"/>
</dbReference>
<dbReference type="PDB" id="6OLE">
    <property type="method" value="EM"/>
    <property type="resolution" value="3.10 A"/>
    <property type="chains" value="Sf=85-151"/>
</dbReference>
<dbReference type="PDB" id="6OLF">
    <property type="method" value="EM"/>
    <property type="resolution" value="3.90 A"/>
    <property type="chains" value="Sf=85-151"/>
</dbReference>
<dbReference type="PDB" id="6OLG">
    <property type="method" value="EM"/>
    <property type="resolution" value="3.40 A"/>
    <property type="chains" value="Bf=79-151"/>
</dbReference>
<dbReference type="PDB" id="6OLI">
    <property type="method" value="EM"/>
    <property type="resolution" value="3.50 A"/>
    <property type="chains" value="Sf=85-151"/>
</dbReference>
<dbReference type="PDB" id="6OLZ">
    <property type="method" value="EM"/>
    <property type="resolution" value="3.90 A"/>
    <property type="chains" value="Bf=79-151"/>
</dbReference>
<dbReference type="PDB" id="6OM0">
    <property type="method" value="EM"/>
    <property type="resolution" value="3.10 A"/>
    <property type="chains" value="Sf=85-151"/>
</dbReference>
<dbReference type="PDB" id="6OM7">
    <property type="method" value="EM"/>
    <property type="resolution" value="3.70 A"/>
    <property type="chains" value="Sf=85-151"/>
</dbReference>
<dbReference type="PDB" id="6QZP">
    <property type="method" value="EM"/>
    <property type="resolution" value="2.90 A"/>
    <property type="chains" value="Sf=85-151"/>
</dbReference>
<dbReference type="PDB" id="6SQO">
    <property type="method" value="X-ray"/>
    <property type="resolution" value="1.41 A"/>
    <property type="chains" value="C/F=1-76"/>
</dbReference>
<dbReference type="PDB" id="6SQR">
    <property type="method" value="X-ray"/>
    <property type="resolution" value="2.18 A"/>
    <property type="chains" value="C/F/L=1-76"/>
</dbReference>
<dbReference type="PDB" id="6SQS">
    <property type="method" value="X-ray"/>
    <property type="resolution" value="1.83 A"/>
    <property type="chains" value="C/F=1-76"/>
</dbReference>
<dbReference type="PDB" id="6XA1">
    <property type="method" value="EM"/>
    <property type="resolution" value="2.80 A"/>
    <property type="chains" value="Sf=89-151"/>
</dbReference>
<dbReference type="PDB" id="6Y0G">
    <property type="method" value="EM"/>
    <property type="resolution" value="3.20 A"/>
    <property type="chains" value="Sf=1-156"/>
</dbReference>
<dbReference type="PDB" id="6Y57">
    <property type="method" value="EM"/>
    <property type="resolution" value="3.50 A"/>
    <property type="chains" value="sh=1-156"/>
</dbReference>
<dbReference type="PDB" id="6YBS">
    <property type="method" value="EM"/>
    <property type="resolution" value="3.10 A"/>
    <property type="chains" value="k=1-156"/>
</dbReference>
<dbReference type="PDB" id="6Z6L">
    <property type="method" value="EM"/>
    <property type="resolution" value="3.00 A"/>
    <property type="chains" value="Sf=1-156"/>
</dbReference>
<dbReference type="PDB" id="6Z6M">
    <property type="method" value="EM"/>
    <property type="resolution" value="3.10 A"/>
    <property type="chains" value="Sf=1-156"/>
</dbReference>
<dbReference type="PDB" id="6Z6N">
    <property type="method" value="EM"/>
    <property type="resolution" value="2.90 A"/>
    <property type="chains" value="Sf=1-156"/>
</dbReference>
<dbReference type="PDB" id="6ZLW">
    <property type="method" value="EM"/>
    <property type="resolution" value="2.60 A"/>
    <property type="chains" value="g=1-156"/>
</dbReference>
<dbReference type="PDB" id="6ZM7">
    <property type="method" value="EM"/>
    <property type="resolution" value="2.70 A"/>
    <property type="chains" value="Sf=1-156"/>
</dbReference>
<dbReference type="PDB" id="6ZME">
    <property type="method" value="EM"/>
    <property type="resolution" value="3.00 A"/>
    <property type="chains" value="Sf=1-156"/>
</dbReference>
<dbReference type="PDB" id="6ZMI">
    <property type="method" value="EM"/>
    <property type="resolution" value="2.60 A"/>
    <property type="chains" value="Sf=1-156"/>
</dbReference>
<dbReference type="PDB" id="6ZMO">
    <property type="method" value="EM"/>
    <property type="resolution" value="3.10 A"/>
    <property type="chains" value="Sf=1-156"/>
</dbReference>
<dbReference type="PDB" id="6ZMT">
    <property type="method" value="EM"/>
    <property type="resolution" value="3.00 A"/>
    <property type="chains" value="g=1-156"/>
</dbReference>
<dbReference type="PDB" id="6ZMW">
    <property type="method" value="EM"/>
    <property type="resolution" value="3.70 A"/>
    <property type="chains" value="k=1-156"/>
</dbReference>
<dbReference type="PDB" id="6ZN5">
    <property type="method" value="EM"/>
    <property type="resolution" value="3.20 A"/>
    <property type="chains" value="g=78-149"/>
</dbReference>
<dbReference type="PDB" id="6ZOJ">
    <property type="method" value="EM"/>
    <property type="resolution" value="2.80 A"/>
    <property type="chains" value="f=78-149"/>
</dbReference>
<dbReference type="PDB" id="6ZOL">
    <property type="method" value="EM"/>
    <property type="resolution" value="2.80 A"/>
    <property type="chains" value="f=78-149"/>
</dbReference>
<dbReference type="PDB" id="6ZON">
    <property type="method" value="EM"/>
    <property type="resolution" value="3.00 A"/>
    <property type="chains" value="U=1-156"/>
</dbReference>
<dbReference type="PDB" id="6ZP4">
    <property type="method" value="EM"/>
    <property type="resolution" value="2.90 A"/>
    <property type="chains" value="U=1-156"/>
</dbReference>
<dbReference type="PDB" id="6ZUO">
    <property type="method" value="EM"/>
    <property type="resolution" value="3.10 A"/>
    <property type="chains" value="f=1-156"/>
</dbReference>
<dbReference type="PDB" id="6ZV6">
    <property type="method" value="EM"/>
    <property type="resolution" value="2.90 A"/>
    <property type="chains" value="f=1-156"/>
</dbReference>
<dbReference type="PDB" id="6ZVH">
    <property type="method" value="EM"/>
    <property type="resolution" value="2.90 A"/>
    <property type="chains" value="f=85-151"/>
</dbReference>
<dbReference type="PDB" id="6ZVJ">
    <property type="method" value="EM"/>
    <property type="resolution" value="3.80 A"/>
    <property type="chains" value="U=88-149"/>
</dbReference>
<dbReference type="PDB" id="6ZXD">
    <property type="method" value="EM"/>
    <property type="resolution" value="3.20 A"/>
    <property type="chains" value="f=1-156"/>
</dbReference>
<dbReference type="PDB" id="6ZXE">
    <property type="method" value="EM"/>
    <property type="resolution" value="3.00 A"/>
    <property type="chains" value="f=1-156"/>
</dbReference>
<dbReference type="PDB" id="6ZXF">
    <property type="method" value="EM"/>
    <property type="resolution" value="3.70 A"/>
    <property type="chains" value="f=1-156"/>
</dbReference>
<dbReference type="PDB" id="6ZXG">
    <property type="method" value="EM"/>
    <property type="resolution" value="2.60 A"/>
    <property type="chains" value="f=1-156"/>
</dbReference>
<dbReference type="PDB" id="6ZXH">
    <property type="method" value="EM"/>
    <property type="resolution" value="2.70 A"/>
    <property type="chains" value="f=1-156"/>
</dbReference>
<dbReference type="PDB" id="7A09">
    <property type="method" value="EM"/>
    <property type="resolution" value="3.50 A"/>
    <property type="chains" value="U=1-156"/>
</dbReference>
<dbReference type="PDB" id="7BWD">
    <property type="method" value="EM"/>
    <property type="resolution" value="4.32 A"/>
    <property type="chains" value="L/M=1-76"/>
</dbReference>
<dbReference type="PDB" id="7F0N">
    <property type="method" value="X-ray"/>
    <property type="resolution" value="1.60 A"/>
    <property type="chains" value="A=1-76"/>
</dbReference>
<dbReference type="PDB" id="7JQB">
    <property type="method" value="EM"/>
    <property type="resolution" value="2.70 A"/>
    <property type="chains" value="g=1-156"/>
</dbReference>
<dbReference type="PDB" id="7JQC">
    <property type="method" value="EM"/>
    <property type="resolution" value="3.30 A"/>
    <property type="chains" value="g=1-156"/>
</dbReference>
<dbReference type="PDB" id="7K5I">
    <property type="method" value="EM"/>
    <property type="resolution" value="2.90 A"/>
    <property type="chains" value="f=1-149"/>
</dbReference>
<dbReference type="PDB" id="7MQ9">
    <property type="method" value="EM"/>
    <property type="resolution" value="3.87 A"/>
    <property type="chains" value="NT=1-156"/>
</dbReference>
<dbReference type="PDB" id="7MQA">
    <property type="method" value="EM"/>
    <property type="resolution" value="2.70 A"/>
    <property type="chains" value="NT=1-156"/>
</dbReference>
<dbReference type="PDB" id="7OOJ">
    <property type="method" value="X-ray"/>
    <property type="resolution" value="2.60 A"/>
    <property type="chains" value="A/B=1-76"/>
</dbReference>
<dbReference type="PDB" id="7QP6">
    <property type="method" value="EM"/>
    <property type="resolution" value="4.70 A"/>
    <property type="chains" value="k=1-156"/>
</dbReference>
<dbReference type="PDB" id="7QP7">
    <property type="method" value="EM"/>
    <property type="resolution" value="3.70 A"/>
    <property type="chains" value="k=1-156"/>
</dbReference>
<dbReference type="PDB" id="7R4X">
    <property type="method" value="EM"/>
    <property type="resolution" value="2.15 A"/>
    <property type="chains" value="f=1-156"/>
</dbReference>
<dbReference type="PDB" id="7TQL">
    <property type="method" value="EM"/>
    <property type="resolution" value="3.40 A"/>
    <property type="chains" value="g=85-149"/>
</dbReference>
<dbReference type="PDB" id="7WTT">
    <property type="method" value="EM"/>
    <property type="resolution" value="3.10 A"/>
    <property type="chains" value="f=1-156"/>
</dbReference>
<dbReference type="PDB" id="7WTU">
    <property type="method" value="EM"/>
    <property type="resolution" value="3.00 A"/>
    <property type="chains" value="f=1-156"/>
</dbReference>
<dbReference type="PDB" id="7WTV">
    <property type="method" value="EM"/>
    <property type="resolution" value="3.50 A"/>
    <property type="chains" value="f=1-156"/>
</dbReference>
<dbReference type="PDB" id="7WTW">
    <property type="method" value="EM"/>
    <property type="resolution" value="3.20 A"/>
    <property type="chains" value="f=1-156"/>
</dbReference>
<dbReference type="PDB" id="7WTX">
    <property type="method" value="EM"/>
    <property type="resolution" value="3.10 A"/>
    <property type="chains" value="f=1-156"/>
</dbReference>
<dbReference type="PDB" id="7WTZ">
    <property type="method" value="EM"/>
    <property type="resolution" value="3.00 A"/>
    <property type="chains" value="f=1-156"/>
</dbReference>
<dbReference type="PDB" id="7WU0">
    <property type="method" value="EM"/>
    <property type="resolution" value="3.30 A"/>
    <property type="chains" value="f=1-156"/>
</dbReference>
<dbReference type="PDB" id="7XNY">
    <property type="method" value="EM"/>
    <property type="resolution" value="2.50 A"/>
    <property type="chains" value="Sf=1-156"/>
</dbReference>
<dbReference type="PDB" id="8G5Y">
    <property type="method" value="EM"/>
    <property type="resolution" value="2.29 A"/>
    <property type="chains" value="Sf=1-156"/>
</dbReference>
<dbReference type="PDB" id="8G60">
    <property type="method" value="EM"/>
    <property type="resolution" value="2.54 A"/>
    <property type="chains" value="Sf=1-156"/>
</dbReference>
<dbReference type="PDB" id="8G61">
    <property type="method" value="EM"/>
    <property type="resolution" value="2.94 A"/>
    <property type="chains" value="Sf=1-156"/>
</dbReference>
<dbReference type="PDB" id="8G6J">
    <property type="method" value="EM"/>
    <property type="resolution" value="2.80 A"/>
    <property type="chains" value="Sf=1-156"/>
</dbReference>
<dbReference type="PDB" id="8GLP">
    <property type="method" value="EM"/>
    <property type="resolution" value="1.67 A"/>
    <property type="chains" value="Sf=1-156"/>
</dbReference>
<dbReference type="PDB" id="8HTC">
    <property type="method" value="X-ray"/>
    <property type="resolution" value="2.20 A"/>
    <property type="chains" value="B=1-76"/>
</dbReference>
<dbReference type="PDB" id="8HTF">
    <property type="method" value="X-ray"/>
    <property type="resolution" value="2.15 A"/>
    <property type="chains" value="B=1-76"/>
</dbReference>
<dbReference type="PDB" id="8IFD">
    <property type="method" value="EM"/>
    <property type="resolution" value="2.59 A"/>
    <property type="chains" value="3R=1-156"/>
</dbReference>
<dbReference type="PDB" id="8IFE">
    <property type="method" value="EM"/>
    <property type="resolution" value="2.57 A"/>
    <property type="chains" value="3R=1-156"/>
</dbReference>
<dbReference type="PDB" id="8IVB">
    <property type="method" value="NMR"/>
    <property type="chains" value="A=1-76"/>
</dbReference>
<dbReference type="PDB" id="8K2C">
    <property type="method" value="EM"/>
    <property type="resolution" value="2.40 A"/>
    <property type="chains" value="Sf=1-156"/>
</dbReference>
<dbReference type="PDB" id="8OZ0">
    <property type="method" value="EM"/>
    <property type="resolution" value="3.50 A"/>
    <property type="chains" value="p=1-156"/>
</dbReference>
<dbReference type="PDB" id="8PJ1">
    <property type="method" value="EM"/>
    <property type="resolution" value="3.40 A"/>
    <property type="chains" value="k=1-156"/>
</dbReference>
<dbReference type="PDB" id="8PJ2">
    <property type="method" value="EM"/>
    <property type="resolution" value="3.40 A"/>
    <property type="chains" value="k=1-156"/>
</dbReference>
<dbReference type="PDB" id="8PJ3">
    <property type="method" value="EM"/>
    <property type="resolution" value="3.70 A"/>
    <property type="chains" value="k=1-156"/>
</dbReference>
<dbReference type="PDB" id="8PJ4">
    <property type="method" value="EM"/>
    <property type="resolution" value="3.20 A"/>
    <property type="chains" value="k=1-156"/>
</dbReference>
<dbReference type="PDB" id="8PJ5">
    <property type="method" value="EM"/>
    <property type="resolution" value="2.90 A"/>
    <property type="chains" value="k=1-156"/>
</dbReference>
<dbReference type="PDB" id="8PJ6">
    <property type="method" value="EM"/>
    <property type="resolution" value="2.90 A"/>
    <property type="chains" value="k=1-156"/>
</dbReference>
<dbReference type="PDB" id="8PPK">
    <property type="method" value="EM"/>
    <property type="resolution" value="2.98 A"/>
    <property type="chains" value="f=1-156"/>
</dbReference>
<dbReference type="PDB" id="8PPL">
    <property type="method" value="EM"/>
    <property type="resolution" value="2.65 A"/>
    <property type="chains" value="Af=1-156"/>
</dbReference>
<dbReference type="PDB" id="8QOI">
    <property type="method" value="EM"/>
    <property type="resolution" value="1.90 A"/>
    <property type="chains" value="Sf=1-156"/>
</dbReference>
<dbReference type="PDB" id="8T4S">
    <property type="method" value="EM"/>
    <property type="resolution" value="2.60 A"/>
    <property type="chains" value="f=1-156"/>
</dbReference>
<dbReference type="PDB" id="8UKB">
    <property type="method" value="EM"/>
    <property type="resolution" value="3.05 A"/>
    <property type="chains" value="Sf=85-151"/>
</dbReference>
<dbReference type="PDB" id="8X7I">
    <property type="method" value="EM"/>
    <property type="resolution" value="3.27 A"/>
    <property type="chains" value="M=1-75"/>
</dbReference>
<dbReference type="PDB" id="8X7J">
    <property type="method" value="EM"/>
    <property type="resolution" value="3.39 A"/>
    <property type="chains" value="M=1-75"/>
</dbReference>
<dbReference type="PDB" id="8XP2">
    <property type="method" value="EM"/>
    <property type="resolution" value="3.20 A"/>
    <property type="chains" value="Sf=1-156"/>
</dbReference>
<dbReference type="PDB" id="8XP3">
    <property type="method" value="EM"/>
    <property type="resolution" value="3.40 A"/>
    <property type="chains" value="Sf=1-156"/>
</dbReference>
<dbReference type="PDB" id="8XSX">
    <property type="method" value="EM"/>
    <property type="resolution" value="2.40 A"/>
    <property type="chains" value="Sf=1-156"/>
</dbReference>
<dbReference type="PDB" id="8XSY">
    <property type="method" value="EM"/>
    <property type="resolution" value="3.00 A"/>
    <property type="chains" value="Sf=1-156"/>
</dbReference>
<dbReference type="PDB" id="8XSZ">
    <property type="method" value="EM"/>
    <property type="resolution" value="3.20 A"/>
    <property type="chains" value="Sf=1-156"/>
</dbReference>
<dbReference type="PDB" id="8XXL">
    <property type="method" value="EM"/>
    <property type="resolution" value="2.90 A"/>
    <property type="chains" value="Sf=1-156"/>
</dbReference>
<dbReference type="PDB" id="8XXM">
    <property type="method" value="EM"/>
    <property type="resolution" value="3.20 A"/>
    <property type="chains" value="Sf=1-156"/>
</dbReference>
<dbReference type="PDB" id="8XXN">
    <property type="method" value="EM"/>
    <property type="resolution" value="3.60 A"/>
    <property type="chains" value="Sf=1-156"/>
</dbReference>
<dbReference type="PDB" id="8YOO">
    <property type="method" value="EM"/>
    <property type="resolution" value="2.00 A"/>
    <property type="chains" value="Sf=1-156"/>
</dbReference>
<dbReference type="PDB" id="8YOP">
    <property type="method" value="EM"/>
    <property type="resolution" value="2.20 A"/>
    <property type="chains" value="Sf=1-156"/>
</dbReference>
<dbReference type="PDB" id="8ZDB">
    <property type="method" value="EM"/>
    <property type="resolution" value="3.60 A"/>
    <property type="chains" value="f/i/j=1-156"/>
</dbReference>
<dbReference type="PDB" id="8ZDC">
    <property type="method" value="EM"/>
    <property type="resolution" value="3.80 A"/>
    <property type="chains" value="i/j=1-76"/>
</dbReference>
<dbReference type="PDB" id="8ZDD">
    <property type="method" value="EM"/>
    <property type="resolution" value="3.70 A"/>
    <property type="chains" value="i/j=1-76"/>
</dbReference>
<dbReference type="PDB" id="9BKD">
    <property type="method" value="EM"/>
    <property type="resolution" value="2.60 A"/>
    <property type="chains" value="k=1-156"/>
</dbReference>
<dbReference type="PDB" id="9BLN">
    <property type="method" value="EM"/>
    <property type="resolution" value="3.90 A"/>
    <property type="chains" value="k=1-156"/>
</dbReference>
<dbReference type="PDB" id="9C3H">
    <property type="method" value="EM"/>
    <property type="resolution" value="2.00 A"/>
    <property type="chains" value="Sz=1-156"/>
</dbReference>
<dbReference type="PDB" id="9G8M">
    <property type="method" value="EM"/>
    <property type="resolution" value="3.30 A"/>
    <property type="chains" value="Sf=1-156"/>
</dbReference>
<dbReference type="PDB" id="9G8O">
    <property type="method" value="EM"/>
    <property type="resolution" value="3.40 A"/>
    <property type="chains" value="Sf=1-156"/>
</dbReference>
<dbReference type="PDB" id="9IJU">
    <property type="method" value="X-ray"/>
    <property type="resolution" value="2.46 A"/>
    <property type="chains" value="B/D/F/H=1-75"/>
</dbReference>
<dbReference type="PDB" id="9IML">
    <property type="method" value="X-ray"/>
    <property type="resolution" value="2.78 A"/>
    <property type="chains" value="B/D/F/H=1-75"/>
</dbReference>
<dbReference type="PDB" id="9IPU">
    <property type="method" value="EM"/>
    <property type="resolution" value="4.30 A"/>
    <property type="chains" value="M=1-75"/>
</dbReference>
<dbReference type="PDBsum" id="2KHW"/>
<dbReference type="PDBsum" id="2KOX"/>
<dbReference type="PDBsum" id="2KTF"/>
<dbReference type="PDBsum" id="2KWU"/>
<dbReference type="PDBsum" id="2KWV"/>
<dbReference type="PDBsum" id="2L0F"/>
<dbReference type="PDBsum" id="2L0T"/>
<dbReference type="PDBsum" id="2XK5"/>
<dbReference type="PDBsum" id="3AXC"/>
<dbReference type="PDBsum" id="3I3T"/>
<dbReference type="PDBsum" id="3K9P"/>
<dbReference type="PDBsum" id="3N30"/>
<dbReference type="PDBsum" id="3N32"/>
<dbReference type="PDBsum" id="3NHE"/>
<dbReference type="PDBsum" id="3NOB"/>
<dbReference type="PDBsum" id="3NS8"/>
<dbReference type="PDBsum" id="3PHD"/>
<dbReference type="PDBsum" id="3PHW"/>
<dbReference type="PDBsum" id="3TBL"/>
<dbReference type="PDBsum" id="3VDZ"/>
<dbReference type="PDBsum" id="4R62"/>
<dbReference type="PDBsum" id="4UG0"/>
<dbReference type="PDBsum" id="4V6X"/>
<dbReference type="PDBsum" id="5A2Q"/>
<dbReference type="PDBsum" id="5AJ0"/>
<dbReference type="PDBsum" id="5FLX"/>
<dbReference type="PDBsum" id="5LKS"/>
<dbReference type="PDBsum" id="5T2C"/>
<dbReference type="PDBsum" id="5WVO"/>
<dbReference type="PDBsum" id="5YDK"/>
<dbReference type="PDBsum" id="6DC6"/>
<dbReference type="PDBsum" id="6FEC"/>
<dbReference type="PDBsum" id="6G18"/>
<dbReference type="PDBsum" id="6G51"/>
<dbReference type="PDBsum" id="6G53"/>
<dbReference type="PDBsum" id="6G5H"/>
<dbReference type="PDBsum" id="6G5I"/>
<dbReference type="PDBsum" id="6IP5"/>
<dbReference type="PDBsum" id="6IP6"/>
<dbReference type="PDBsum" id="6IP8"/>
<dbReference type="PDBsum" id="6J99"/>
<dbReference type="PDBsum" id="6KFP"/>
<dbReference type="PDBsum" id="6KG6"/>
<dbReference type="PDBsum" id="6KIU"/>
<dbReference type="PDBsum" id="6KIV"/>
<dbReference type="PDBsum" id="6KIW"/>
<dbReference type="PDBsum" id="6OLE"/>
<dbReference type="PDBsum" id="6OLF"/>
<dbReference type="PDBsum" id="6OLG"/>
<dbReference type="PDBsum" id="6OLI"/>
<dbReference type="PDBsum" id="6OLZ"/>
<dbReference type="PDBsum" id="6OM0"/>
<dbReference type="PDBsum" id="6OM7"/>
<dbReference type="PDBsum" id="6QZP"/>
<dbReference type="PDBsum" id="6SQO"/>
<dbReference type="PDBsum" id="6SQR"/>
<dbReference type="PDBsum" id="6SQS"/>
<dbReference type="PDBsum" id="6XA1"/>
<dbReference type="PDBsum" id="6Y0G"/>
<dbReference type="PDBsum" id="6Y57"/>
<dbReference type="PDBsum" id="6YBS"/>
<dbReference type="PDBsum" id="6Z6L"/>
<dbReference type="PDBsum" id="6Z6M"/>
<dbReference type="PDBsum" id="6Z6N"/>
<dbReference type="PDBsum" id="6ZLW"/>
<dbReference type="PDBsum" id="6ZM7"/>
<dbReference type="PDBsum" id="6ZME"/>
<dbReference type="PDBsum" id="6ZMI"/>
<dbReference type="PDBsum" id="6ZMO"/>
<dbReference type="PDBsum" id="6ZMT"/>
<dbReference type="PDBsum" id="6ZMW"/>
<dbReference type="PDBsum" id="6ZN5"/>
<dbReference type="PDBsum" id="6ZOJ"/>
<dbReference type="PDBsum" id="6ZOL"/>
<dbReference type="PDBsum" id="6ZON"/>
<dbReference type="PDBsum" id="6ZP4"/>
<dbReference type="PDBsum" id="6ZUO"/>
<dbReference type="PDBsum" id="6ZV6"/>
<dbReference type="PDBsum" id="6ZVH"/>
<dbReference type="PDBsum" id="6ZVJ"/>
<dbReference type="PDBsum" id="6ZXD"/>
<dbReference type="PDBsum" id="6ZXE"/>
<dbReference type="PDBsum" id="6ZXF"/>
<dbReference type="PDBsum" id="6ZXG"/>
<dbReference type="PDBsum" id="6ZXH"/>
<dbReference type="PDBsum" id="7A09"/>
<dbReference type="PDBsum" id="7BWD"/>
<dbReference type="PDBsum" id="7F0N"/>
<dbReference type="PDBsum" id="7JQB"/>
<dbReference type="PDBsum" id="7JQC"/>
<dbReference type="PDBsum" id="7K5I"/>
<dbReference type="PDBsum" id="7MQ9"/>
<dbReference type="PDBsum" id="7MQA"/>
<dbReference type="PDBsum" id="7OOJ"/>
<dbReference type="PDBsum" id="7QP6"/>
<dbReference type="PDBsum" id="7QP7"/>
<dbReference type="PDBsum" id="7R4X"/>
<dbReference type="PDBsum" id="7TQL"/>
<dbReference type="PDBsum" id="7WTT"/>
<dbReference type="PDBsum" id="7WTU"/>
<dbReference type="PDBsum" id="7WTV"/>
<dbReference type="PDBsum" id="7WTW"/>
<dbReference type="PDBsum" id="7WTX"/>
<dbReference type="PDBsum" id="7WTZ"/>
<dbReference type="PDBsum" id="7WU0"/>
<dbReference type="PDBsum" id="7XNY"/>
<dbReference type="PDBsum" id="8G5Y"/>
<dbReference type="PDBsum" id="8G60"/>
<dbReference type="PDBsum" id="8G61"/>
<dbReference type="PDBsum" id="8G6J"/>
<dbReference type="PDBsum" id="8GLP"/>
<dbReference type="PDBsum" id="8HTC"/>
<dbReference type="PDBsum" id="8HTF"/>
<dbReference type="PDBsum" id="8IFD"/>
<dbReference type="PDBsum" id="8IFE"/>
<dbReference type="PDBsum" id="8IVB"/>
<dbReference type="PDBsum" id="8K2C"/>
<dbReference type="PDBsum" id="8OZ0"/>
<dbReference type="PDBsum" id="8PJ1"/>
<dbReference type="PDBsum" id="8PJ2"/>
<dbReference type="PDBsum" id="8PJ3"/>
<dbReference type="PDBsum" id="8PJ4"/>
<dbReference type="PDBsum" id="8PJ5"/>
<dbReference type="PDBsum" id="8PJ6"/>
<dbReference type="PDBsum" id="8PPK"/>
<dbReference type="PDBsum" id="8PPL"/>
<dbReference type="PDBsum" id="8QOI"/>
<dbReference type="PDBsum" id="8T4S"/>
<dbReference type="PDBsum" id="8UKB"/>
<dbReference type="PDBsum" id="8X7I"/>
<dbReference type="PDBsum" id="8X7J"/>
<dbReference type="PDBsum" id="8XP2"/>
<dbReference type="PDBsum" id="8XP3"/>
<dbReference type="PDBsum" id="8XSX"/>
<dbReference type="PDBsum" id="8XSY"/>
<dbReference type="PDBsum" id="8XSZ"/>
<dbReference type="PDBsum" id="8XXL"/>
<dbReference type="PDBsum" id="8XXM"/>
<dbReference type="PDBsum" id="8XXN"/>
<dbReference type="PDBsum" id="8YOO"/>
<dbReference type="PDBsum" id="8YOP"/>
<dbReference type="PDBsum" id="8ZDB"/>
<dbReference type="PDBsum" id="8ZDC"/>
<dbReference type="PDBsum" id="8ZDD"/>
<dbReference type="PDBsum" id="9BKD"/>
<dbReference type="PDBsum" id="9BLN"/>
<dbReference type="PDBsum" id="9C3H"/>
<dbReference type="PDBsum" id="9G8M"/>
<dbReference type="PDBsum" id="9G8O"/>
<dbReference type="PDBsum" id="9IJU"/>
<dbReference type="PDBsum" id="9IML"/>
<dbReference type="PDBsum" id="9IPU"/>
<dbReference type="BMRB" id="P62979"/>
<dbReference type="EMDB" id="EMD-0693"/>
<dbReference type="EMDB" id="EMD-10668"/>
<dbReference type="EMDB" id="EMD-10690"/>
<dbReference type="EMDB" id="EMD-10772"/>
<dbReference type="EMDB" id="EMD-11098"/>
<dbReference type="EMDB" id="EMD-11099"/>
<dbReference type="EMDB" id="EMD-11100"/>
<dbReference type="EMDB" id="EMD-11276"/>
<dbReference type="EMDB" id="EMD-11288"/>
<dbReference type="EMDB" id="EMD-11289"/>
<dbReference type="EMDB" id="EMD-11292"/>
<dbReference type="EMDB" id="EMD-11299"/>
<dbReference type="EMDB" id="EMD-11301"/>
<dbReference type="EMDB" id="EMD-11302"/>
<dbReference type="EMDB" id="EMD-11325"/>
<dbReference type="EMDB" id="EMD-11335"/>
<dbReference type="EMDB" id="EMD-11440"/>
<dbReference type="EMDB" id="EMD-11441"/>
<dbReference type="EMDB" id="EMD-11456"/>
<dbReference type="EMDB" id="EMD-11458"/>
<dbReference type="EMDB" id="EMD-11517"/>
<dbReference type="EMDB" id="EMD-11518"/>
<dbReference type="EMDB" id="EMD-11519"/>
<dbReference type="EMDB" id="EMD-11520"/>
<dbReference type="EMDB" id="EMD-11521"/>
<dbReference type="EMDB" id="EMD-11602"/>
<dbReference type="EMDB" id="EMD-14113"/>
<dbReference type="EMDB" id="EMD-14114"/>
<dbReference type="EMDB" id="EMD-14317"/>
<dbReference type="EMDB" id="EMD-17297"/>
<dbReference type="EMDB" id="EMD-17696"/>
<dbReference type="EMDB" id="EMD-17697"/>
<dbReference type="EMDB" id="EMD-17698"/>
<dbReference type="EMDB" id="EMD-17699"/>
<dbReference type="EMDB" id="EMD-17700"/>
<dbReference type="EMDB" id="EMD-17701"/>
<dbReference type="EMDB" id="EMD-17804"/>
<dbReference type="EMDB" id="EMD-17805"/>
<dbReference type="EMDB" id="EMD-18539"/>
<dbReference type="EMDB" id="EMD-23936"/>
<dbReference type="EMDB" id="EMD-23937"/>
<dbReference type="EMDB" id="EMD-23938"/>
<dbReference type="EMDB" id="EMD-26067"/>
<dbReference type="EMDB" id="EMD-29757"/>
<dbReference type="EMDB" id="EMD-29758"/>
<dbReference type="EMDB" id="EMD-29759"/>
<dbReference type="EMDB" id="EMD-29760"/>
<dbReference type="EMDB" id="EMD-29771"/>
<dbReference type="EMDB" id="EMD-30232"/>
<dbReference type="EMDB" id="EMD-32800"/>
<dbReference type="EMDB" id="EMD-32801"/>
<dbReference type="EMDB" id="EMD-32802"/>
<dbReference type="EMDB" id="EMD-32803"/>
<dbReference type="EMDB" id="EMD-32804"/>
<dbReference type="EMDB" id="EMD-32806"/>
<dbReference type="EMDB" id="EMD-32807"/>
<dbReference type="EMDB" id="EMD-33330"/>
<dbReference type="EMDB" id="EMD-35413"/>
<dbReference type="EMDB" id="EMD-35414"/>
<dbReference type="EMDB" id="EMD-36838"/>
<dbReference type="EMDB" id="EMD-38099"/>
<dbReference type="EMDB" id="EMD-38100"/>
<dbReference type="EMDB" id="EMD-38548"/>
<dbReference type="EMDB" id="EMD-38549"/>
<dbReference type="EMDB" id="EMD-38629"/>
<dbReference type="EMDB" id="EMD-38630"/>
<dbReference type="EMDB" id="EMD-38631"/>
<dbReference type="EMDB" id="EMD-38752"/>
<dbReference type="EMDB" id="EMD-38753"/>
<dbReference type="EMDB" id="EMD-38754"/>
<dbReference type="EMDB" id="EMD-3883"/>
<dbReference type="EMDB" id="EMD-39455"/>
<dbReference type="EMDB" id="EMD-39456"/>
<dbReference type="EMDB" id="EMD-39956"/>
<dbReference type="EMDB" id="EMD-39957"/>
<dbReference type="EMDB" id="EMD-39958"/>
<dbReference type="EMDB" id="EMD-40205"/>
<dbReference type="EMDB" id="EMD-4070"/>
<dbReference type="EMDB" id="EMD-41039"/>
<dbReference type="EMDB" id="EMD-42351"/>
<dbReference type="EMDB" id="EMD-4242"/>
<dbReference type="EMDB" id="EMD-4337"/>
<dbReference type="EMDB" id="EMD-4350"/>
<dbReference type="EMDB" id="EMD-4351"/>
<dbReference type="EMDB" id="EMD-44641"/>
<dbReference type="EMDB" id="EMD-44671"/>
<dbReference type="EMDB" id="EMD-45170"/>
<dbReference type="EMDB" id="EMD-51132"/>
<dbReference type="EMDB" id="EMD-51134"/>
<dbReference type="EMDB" id="EMD-60781"/>
<dbReference type="EMDB" id="EMD-9701"/>
<dbReference type="EMDB" id="EMD-9702"/>
<dbReference type="EMDB" id="EMD-9703"/>
<dbReference type="EMDB" id="EMD-9783"/>
<dbReference type="EMDB" id="EMD-9998"/>
<dbReference type="EMDB" id="EMD-9999"/>
<dbReference type="SMR" id="P62979"/>
<dbReference type="BioGRID" id="112147">
    <property type="interactions" value="545"/>
</dbReference>
<dbReference type="ComplexPortal" id="CPX-5223">
    <property type="entry name" value="40S cytosolic small ribosomal subunit"/>
</dbReference>
<dbReference type="CORUM" id="P62979"/>
<dbReference type="FunCoup" id="P62979">
    <property type="interactions" value="1843"/>
</dbReference>
<dbReference type="IntAct" id="P62979">
    <property type="interactions" value="188"/>
</dbReference>
<dbReference type="MINT" id="P62979"/>
<dbReference type="STRING" id="9606.ENSP00000272317"/>
<dbReference type="ChEMBL" id="CHEMBL4523597"/>
<dbReference type="GlyCosmos" id="P62979">
    <property type="glycosylation" value="1 site, 1 glycan"/>
</dbReference>
<dbReference type="GlyGen" id="P62979">
    <property type="glycosylation" value="1 site, 1 O-linked glycan (1 site)"/>
</dbReference>
<dbReference type="iPTMnet" id="P62979"/>
<dbReference type="MetOSite" id="P62979"/>
<dbReference type="PhosphoSitePlus" id="P62979"/>
<dbReference type="SwissPalm" id="P62979"/>
<dbReference type="BioMuta" id="RPS27A"/>
<dbReference type="DMDM" id="302393745"/>
<dbReference type="jPOST" id="P62979"/>
<dbReference type="MassIVE" id="P62979"/>
<dbReference type="PaxDb" id="9606-ENSP00000272317"/>
<dbReference type="PeptideAtlas" id="P62979"/>
<dbReference type="ProteomicsDB" id="57460"/>
<dbReference type="Pumba" id="P62979"/>
<dbReference type="TopDownProteomics" id="P62979"/>
<dbReference type="ABCD" id="P62979">
    <property type="antibodies" value="3 sequenced antibodies"/>
</dbReference>
<dbReference type="Antibodypedia" id="30320">
    <property type="antibodies" value="221 antibodies from 29 providers"/>
</dbReference>
<dbReference type="DNASU" id="6233"/>
<dbReference type="Ensembl" id="ENST00000272317.11">
    <property type="protein sequence ID" value="ENSP00000272317.6"/>
    <property type="gene ID" value="ENSG00000143947.15"/>
</dbReference>
<dbReference type="Ensembl" id="ENST00000402285.7">
    <property type="protein sequence ID" value="ENSP00000383981.3"/>
    <property type="gene ID" value="ENSG00000143947.15"/>
</dbReference>
<dbReference type="Ensembl" id="ENST00000404735.1">
    <property type="protein sequence ID" value="ENSP00000385659.1"/>
    <property type="gene ID" value="ENSG00000143947.15"/>
</dbReference>
<dbReference type="GeneID" id="6233"/>
<dbReference type="KEGG" id="hsa:6233"/>
<dbReference type="MANE-Select" id="ENST00000272317.11">
    <property type="protein sequence ID" value="ENSP00000272317.6"/>
    <property type="RefSeq nucleotide sequence ID" value="NM_002954.6"/>
    <property type="RefSeq protein sequence ID" value="NP_002945.1"/>
</dbReference>
<dbReference type="UCSC" id="uc002ryk.4">
    <property type="organism name" value="human"/>
</dbReference>
<dbReference type="AGR" id="HGNC:10417"/>
<dbReference type="CTD" id="6233"/>
<dbReference type="DisGeNET" id="6233"/>
<dbReference type="GeneCards" id="RPS27A"/>
<dbReference type="HGNC" id="HGNC:10417">
    <property type="gene designation" value="RPS27A"/>
</dbReference>
<dbReference type="HPA" id="ENSG00000143947">
    <property type="expression patterns" value="Low tissue specificity"/>
</dbReference>
<dbReference type="MalaCards" id="RPS27A"/>
<dbReference type="MIM" id="191343">
    <property type="type" value="gene"/>
</dbReference>
<dbReference type="neXtProt" id="NX_P62979"/>
<dbReference type="OpenTargets" id="ENSG00000143947"/>
<dbReference type="PharmGKB" id="PA34821"/>
<dbReference type="VEuPathDB" id="HostDB:ENSG00000143947"/>
<dbReference type="eggNOG" id="KOG0004">
    <property type="taxonomic scope" value="Eukaryota"/>
</dbReference>
<dbReference type="GeneTree" id="ENSGT00910000144152"/>
<dbReference type="HOGENOM" id="CLU_010412_2_0_1"/>
<dbReference type="InParanoid" id="P62979"/>
<dbReference type="OMA" id="GVFMAFH"/>
<dbReference type="OrthoDB" id="428577at2759"/>
<dbReference type="PAN-GO" id="P62979">
    <property type="GO annotations" value="8 GO annotations based on evolutionary models"/>
</dbReference>
<dbReference type="PhylomeDB" id="P62979"/>
<dbReference type="TreeFam" id="TF300036"/>
<dbReference type="BioCyc" id="MetaCyc:ENSG00000180019-MONOMER"/>
<dbReference type="PathwayCommons" id="P62979"/>
<dbReference type="Reactome" id="R-HSA-110312">
    <property type="pathway name" value="Translesion synthesis by REV1"/>
</dbReference>
<dbReference type="Reactome" id="R-HSA-110314">
    <property type="pathway name" value="Recognition of DNA damage by PCNA-containing replication complex"/>
</dbReference>
<dbReference type="Reactome" id="R-HSA-110320">
    <property type="pathway name" value="Translesion Synthesis by POLH"/>
</dbReference>
<dbReference type="Reactome" id="R-HSA-1169091">
    <property type="pathway name" value="Activation of NF-kappaB in B cells"/>
</dbReference>
<dbReference type="Reactome" id="R-HSA-1169408">
    <property type="pathway name" value="ISG15 antiviral mechanism"/>
</dbReference>
<dbReference type="Reactome" id="R-HSA-1234176">
    <property type="pathway name" value="Oxygen-dependent proline hydroxylation of Hypoxia-inducible Factor Alpha"/>
</dbReference>
<dbReference type="Reactome" id="R-HSA-1236382">
    <property type="pathway name" value="Constitutive Signaling by Ligand-Responsive EGFR Cancer Variants"/>
</dbReference>
<dbReference type="Reactome" id="R-HSA-1236974">
    <property type="pathway name" value="ER-Phagosome pathway"/>
</dbReference>
<dbReference type="Reactome" id="R-HSA-1253288">
    <property type="pathway name" value="Downregulation of ERBB4 signaling"/>
</dbReference>
<dbReference type="Reactome" id="R-HSA-1295596">
    <property type="pathway name" value="Spry regulation of FGF signaling"/>
</dbReference>
<dbReference type="Reactome" id="R-HSA-1358803">
    <property type="pathway name" value="Downregulation of ERBB2:ERBB3 signaling"/>
</dbReference>
<dbReference type="Reactome" id="R-HSA-156827">
    <property type="pathway name" value="L13a-mediated translational silencing of Ceruloplasmin expression"/>
</dbReference>
<dbReference type="Reactome" id="R-HSA-156902">
    <property type="pathway name" value="Peptide chain elongation"/>
</dbReference>
<dbReference type="Reactome" id="R-HSA-162588">
    <property type="pathway name" value="Budding and maturation of HIV virion"/>
</dbReference>
<dbReference type="Reactome" id="R-HSA-168638">
    <property type="pathway name" value="NOD1/2 Signaling Pathway"/>
</dbReference>
<dbReference type="Reactome" id="R-HSA-168927">
    <property type="pathway name" value="TICAM1, RIP1-mediated IKK complex recruitment"/>
</dbReference>
<dbReference type="Reactome" id="R-HSA-168928">
    <property type="pathway name" value="DDX58/IFIH1-mediated induction of interferon-alpha/beta"/>
</dbReference>
<dbReference type="Reactome" id="R-HSA-174048">
    <property type="pathway name" value="APC/C:Cdc20 mediated degradation of Cyclin B"/>
</dbReference>
<dbReference type="Reactome" id="R-HSA-174084">
    <property type="pathway name" value="Autodegradation of Cdh1 by Cdh1:APC/C"/>
</dbReference>
<dbReference type="Reactome" id="R-HSA-174113">
    <property type="pathway name" value="SCF-beta-TrCP mediated degradation of Emi1"/>
</dbReference>
<dbReference type="Reactome" id="R-HSA-174154">
    <property type="pathway name" value="APC/C:Cdc20 mediated degradation of Securin"/>
</dbReference>
<dbReference type="Reactome" id="R-HSA-174178">
    <property type="pathway name" value="APC/C:Cdh1 mediated degradation of Cdc20 and other APC/C:Cdh1 targeted proteins in late mitosis/early G1"/>
</dbReference>
<dbReference type="Reactome" id="R-HSA-174184">
    <property type="pathway name" value="Cdc20:Phospho-APC/C mediated degradation of Cyclin A"/>
</dbReference>
<dbReference type="Reactome" id="R-HSA-174490">
    <property type="pathway name" value="Membrane binding and targetting of GAG proteins"/>
</dbReference>
<dbReference type="Reactome" id="R-HSA-175474">
    <property type="pathway name" value="Assembly Of The HIV Virion"/>
</dbReference>
<dbReference type="Reactome" id="R-HSA-179409">
    <property type="pathway name" value="APC-Cdc20 mediated degradation of Nek2A"/>
</dbReference>
<dbReference type="Reactome" id="R-HSA-1799339">
    <property type="pathway name" value="SRP-dependent cotranslational protein targeting to membrane"/>
</dbReference>
<dbReference type="Reactome" id="R-HSA-180534">
    <property type="pathway name" value="Vpu mediated degradation of CD4"/>
</dbReference>
<dbReference type="Reactome" id="R-HSA-180585">
    <property type="pathway name" value="Vif-mediated degradation of APOBEC3G"/>
</dbReference>
<dbReference type="Reactome" id="R-HSA-182971">
    <property type="pathway name" value="EGFR downregulation"/>
</dbReference>
<dbReference type="Reactome" id="R-HSA-187577">
    <property type="pathway name" value="SCF(Skp2)-mediated degradation of p27/p21"/>
</dbReference>
<dbReference type="Reactome" id="R-HSA-192823">
    <property type="pathway name" value="Viral mRNA Translation"/>
</dbReference>
<dbReference type="Reactome" id="R-HSA-195253">
    <property type="pathway name" value="Degradation of beta-catenin by the destruction complex"/>
</dbReference>
<dbReference type="Reactome" id="R-HSA-201681">
    <property type="pathway name" value="TCF dependent signaling in response to WNT"/>
</dbReference>
<dbReference type="Reactome" id="R-HSA-202424">
    <property type="pathway name" value="Downstream TCR signaling"/>
</dbReference>
<dbReference type="Reactome" id="R-HSA-205043">
    <property type="pathway name" value="NRIF signals cell death from the nucleus"/>
</dbReference>
<dbReference type="Reactome" id="R-HSA-209543">
    <property type="pathway name" value="p75NTR recruits signalling complexes"/>
</dbReference>
<dbReference type="Reactome" id="R-HSA-209560">
    <property type="pathway name" value="NF-kB is activated and signals survival"/>
</dbReference>
<dbReference type="Reactome" id="R-HSA-211733">
    <property type="pathway name" value="Regulation of activated PAK-2p34 by proteasome mediated degradation"/>
</dbReference>
<dbReference type="Reactome" id="R-HSA-2122947">
    <property type="pathway name" value="NOTCH1 Intracellular Domain Regulates Transcription"/>
</dbReference>
<dbReference type="Reactome" id="R-HSA-2122948">
    <property type="pathway name" value="Activated NOTCH1 Transmits Signal to the Nucleus"/>
</dbReference>
<dbReference type="Reactome" id="R-HSA-2173788">
    <property type="pathway name" value="Downregulation of TGF-beta receptor signaling"/>
</dbReference>
<dbReference type="Reactome" id="R-HSA-2173791">
    <property type="pathway name" value="TGF-beta receptor signaling in EMT (epithelial to mesenchymal transition)"/>
</dbReference>
<dbReference type="Reactome" id="R-HSA-2173795">
    <property type="pathway name" value="Downregulation of SMAD2/3:SMAD4 transcriptional activity"/>
</dbReference>
<dbReference type="Reactome" id="R-HSA-2173796">
    <property type="pathway name" value="SMAD2/SMAD3:SMAD4 heterotrimer regulates transcription"/>
</dbReference>
<dbReference type="Reactome" id="R-HSA-2408557">
    <property type="pathway name" value="Selenocysteine synthesis"/>
</dbReference>
<dbReference type="Reactome" id="R-HSA-2467813">
    <property type="pathway name" value="Separation of Sister Chromatids"/>
</dbReference>
<dbReference type="Reactome" id="R-HSA-2559580">
    <property type="pathway name" value="Oxidative Stress Induced Senescence"/>
</dbReference>
<dbReference type="Reactome" id="R-HSA-2559582">
    <property type="pathway name" value="Senescence-Associated Secretory Phenotype (SASP)"/>
</dbReference>
<dbReference type="Reactome" id="R-HSA-2559585">
    <property type="pathway name" value="Oncogene Induced Senescence"/>
</dbReference>
<dbReference type="Reactome" id="R-HSA-2565942">
    <property type="pathway name" value="Regulation of PLK1 Activity at G2/M Transition"/>
</dbReference>
<dbReference type="Reactome" id="R-HSA-2644606">
    <property type="pathway name" value="Constitutive Signaling by NOTCH1 PEST Domain Mutants"/>
</dbReference>
<dbReference type="Reactome" id="R-HSA-2672351">
    <property type="pathway name" value="Stimuli-sensing channels"/>
</dbReference>
<dbReference type="Reactome" id="R-HSA-2691232">
    <property type="pathway name" value="Constitutive Signaling by NOTCH1 HD Domain Mutants"/>
</dbReference>
<dbReference type="Reactome" id="R-HSA-2871837">
    <property type="pathway name" value="FCERI mediated NF-kB activation"/>
</dbReference>
<dbReference type="Reactome" id="R-HSA-2894862">
    <property type="pathway name" value="Constitutive Signaling by NOTCH1 HD+PEST Domain Mutants"/>
</dbReference>
<dbReference type="Reactome" id="R-HSA-2979096">
    <property type="pathway name" value="NOTCH2 Activation and Transmission of Signal to the Nucleus"/>
</dbReference>
<dbReference type="Reactome" id="R-HSA-3134975">
    <property type="pathway name" value="Regulation of innate immune responses to cytosolic DNA"/>
</dbReference>
<dbReference type="Reactome" id="R-HSA-3322077">
    <property type="pathway name" value="Glycogen synthesis"/>
</dbReference>
<dbReference type="Reactome" id="R-HSA-349425">
    <property type="pathway name" value="Autodegradation of the E3 ubiquitin ligase COP1"/>
</dbReference>
<dbReference type="Reactome" id="R-HSA-3769402">
    <property type="pathway name" value="Deactivation of the beta-catenin transactivating complex"/>
</dbReference>
<dbReference type="Reactome" id="R-HSA-3785653">
    <property type="pathway name" value="Myoclonic epilepsy of Lafora"/>
</dbReference>
<dbReference type="Reactome" id="R-HSA-382556">
    <property type="pathway name" value="ABC-family proteins mediated transport"/>
</dbReference>
<dbReference type="Reactome" id="R-HSA-400253">
    <property type="pathway name" value="Circadian Clock"/>
</dbReference>
<dbReference type="Reactome" id="R-HSA-445989">
    <property type="pathway name" value="TAK1-dependent IKK and NF-kappa-B activation"/>
</dbReference>
<dbReference type="Reactome" id="R-HSA-450302">
    <property type="pathway name" value="activated TAK1 mediates p38 MAPK activation"/>
</dbReference>
<dbReference type="Reactome" id="R-HSA-450321">
    <property type="pathway name" value="JNK (c-Jun kinases) phosphorylation and activation mediated by activated human TAK1"/>
</dbReference>
<dbReference type="Reactome" id="R-HSA-450408">
    <property type="pathway name" value="AUF1 (hnRNP D0) binds and destabilizes mRNA"/>
</dbReference>
<dbReference type="Reactome" id="R-HSA-4608870">
    <property type="pathway name" value="Asymmetric localization of PCP proteins"/>
</dbReference>
<dbReference type="Reactome" id="R-HSA-4641257">
    <property type="pathway name" value="Degradation of AXIN"/>
</dbReference>
<dbReference type="Reactome" id="R-HSA-4641258">
    <property type="pathway name" value="Degradation of DVL"/>
</dbReference>
<dbReference type="Reactome" id="R-HSA-4641263">
    <property type="pathway name" value="Regulation of FZD by ubiquitination"/>
</dbReference>
<dbReference type="Reactome" id="R-HSA-5205685">
    <property type="pathway name" value="PINK1-PRKN Mediated Mitophagy"/>
</dbReference>
<dbReference type="Reactome" id="R-HSA-532668">
    <property type="pathway name" value="N-glycan trimming in the ER and Calnexin/Calreticulin cycle"/>
</dbReference>
<dbReference type="Reactome" id="R-HSA-5357905">
    <property type="pathway name" value="Regulation of TNFR1 signaling"/>
</dbReference>
<dbReference type="Reactome" id="R-HSA-5357956">
    <property type="pathway name" value="TNFR1-induced NF-kappa-B signaling pathway"/>
</dbReference>
<dbReference type="Reactome" id="R-HSA-5358346">
    <property type="pathway name" value="Hedgehog ligand biogenesis"/>
</dbReference>
<dbReference type="Reactome" id="R-HSA-5362768">
    <property type="pathway name" value="Hh mutants are degraded by ERAD"/>
</dbReference>
<dbReference type="Reactome" id="R-HSA-5607761">
    <property type="pathway name" value="Dectin-1 mediated noncanonical NF-kB signaling"/>
</dbReference>
<dbReference type="Reactome" id="R-HSA-5607764">
    <property type="pathway name" value="CLEC7A (Dectin-1) signaling"/>
</dbReference>
<dbReference type="Reactome" id="R-HSA-5610780">
    <property type="pathway name" value="Degradation of GLI1 by the proteasome"/>
</dbReference>
<dbReference type="Reactome" id="R-HSA-5610783">
    <property type="pathway name" value="Degradation of GLI2 by the proteasome"/>
</dbReference>
<dbReference type="Reactome" id="R-HSA-5610785">
    <property type="pathway name" value="GLI3 is processed to GLI3R by the proteasome"/>
</dbReference>
<dbReference type="Reactome" id="R-HSA-5632684">
    <property type="pathway name" value="Hedgehog 'on' state"/>
</dbReference>
<dbReference type="Reactome" id="R-HSA-5654726">
    <property type="pathway name" value="Negative regulation of FGFR1 signaling"/>
</dbReference>
<dbReference type="Reactome" id="R-HSA-5654727">
    <property type="pathway name" value="Negative regulation of FGFR2 signaling"/>
</dbReference>
<dbReference type="Reactome" id="R-HSA-5654732">
    <property type="pathway name" value="Negative regulation of FGFR3 signaling"/>
</dbReference>
<dbReference type="Reactome" id="R-HSA-5654733">
    <property type="pathway name" value="Negative regulation of FGFR4 signaling"/>
</dbReference>
<dbReference type="Reactome" id="R-HSA-5655862">
    <property type="pathway name" value="Translesion synthesis by POLK"/>
</dbReference>
<dbReference type="Reactome" id="R-HSA-5656121">
    <property type="pathway name" value="Translesion synthesis by POLI"/>
</dbReference>
<dbReference type="Reactome" id="R-HSA-5656169">
    <property type="pathway name" value="Termination of translesion DNA synthesis"/>
</dbReference>
<dbReference type="Reactome" id="R-HSA-5658442">
    <property type="pathway name" value="Regulation of RAS by GAPs"/>
</dbReference>
<dbReference type="Reactome" id="R-HSA-5668541">
    <property type="pathway name" value="TNFR2 non-canonical NF-kB pathway"/>
</dbReference>
<dbReference type="Reactome" id="R-HSA-5675221">
    <property type="pathway name" value="Negative regulation of MAPK pathway"/>
</dbReference>
<dbReference type="Reactome" id="R-HSA-5675482">
    <property type="pathway name" value="Regulation of necroptotic cell death"/>
</dbReference>
<dbReference type="Reactome" id="R-HSA-5676590">
    <property type="pathway name" value="NIK--&gt;noncanonical NF-kB signaling"/>
</dbReference>
<dbReference type="Reactome" id="R-HSA-5678895">
    <property type="pathway name" value="Defective CFTR causes cystic fibrosis"/>
</dbReference>
<dbReference type="Reactome" id="R-HSA-5684264">
    <property type="pathway name" value="MAP3K8 (TPL2)-dependent MAPK1/3 activation"/>
</dbReference>
<dbReference type="Reactome" id="R-HSA-5685942">
    <property type="pathway name" value="HDR through Homologous Recombination (HRR)"/>
</dbReference>
<dbReference type="Reactome" id="R-HSA-5687128">
    <property type="pathway name" value="MAPK6/MAPK4 signaling"/>
</dbReference>
<dbReference type="Reactome" id="R-HSA-5689603">
    <property type="pathway name" value="UCH proteinases"/>
</dbReference>
<dbReference type="Reactome" id="R-HSA-5689877">
    <property type="pathway name" value="Josephin domain DUBs"/>
</dbReference>
<dbReference type="Reactome" id="R-HSA-5689880">
    <property type="pathway name" value="Ub-specific processing proteases"/>
</dbReference>
<dbReference type="Reactome" id="R-HSA-5689896">
    <property type="pathway name" value="Ovarian tumor domain proteases"/>
</dbReference>
<dbReference type="Reactome" id="R-HSA-5689901">
    <property type="pathway name" value="Metalloprotease DUBs"/>
</dbReference>
<dbReference type="Reactome" id="R-HSA-5693565">
    <property type="pathway name" value="Recruitment and ATM-mediated phosphorylation of repair and signaling proteins at DNA double strand breaks"/>
</dbReference>
<dbReference type="Reactome" id="R-HSA-5693607">
    <property type="pathway name" value="Processing of DNA double-strand break ends"/>
</dbReference>
<dbReference type="Reactome" id="R-HSA-5696394">
    <property type="pathway name" value="DNA Damage Recognition in GG-NER"/>
</dbReference>
<dbReference type="Reactome" id="R-HSA-5696395">
    <property type="pathway name" value="Formation of Incision Complex in GG-NER"/>
</dbReference>
<dbReference type="Reactome" id="R-HSA-5696397">
    <property type="pathway name" value="Gap-filling DNA repair synthesis and ligation in GG-NER"/>
</dbReference>
<dbReference type="Reactome" id="R-HSA-5696400">
    <property type="pathway name" value="Dual Incision in GG-NER"/>
</dbReference>
<dbReference type="Reactome" id="R-HSA-6781823">
    <property type="pathway name" value="Formation of TC-NER Pre-Incision Complex"/>
</dbReference>
<dbReference type="Reactome" id="R-HSA-6781827">
    <property type="pathway name" value="Transcription-Coupled Nucleotide Excision Repair (TC-NER)"/>
</dbReference>
<dbReference type="Reactome" id="R-HSA-6782135">
    <property type="pathway name" value="Dual incision in TC-NER"/>
</dbReference>
<dbReference type="Reactome" id="R-HSA-6782210">
    <property type="pathway name" value="Gap-filling DNA repair synthesis and ligation in TC-NER"/>
</dbReference>
<dbReference type="Reactome" id="R-HSA-6783310">
    <property type="pathway name" value="Fanconi Anemia Pathway"/>
</dbReference>
<dbReference type="Reactome" id="R-HSA-6791226">
    <property type="pathway name" value="Major pathway of rRNA processing in the nucleolus and cytosol"/>
</dbReference>
<dbReference type="Reactome" id="R-HSA-6804756">
    <property type="pathway name" value="Regulation of TP53 Activity through Phosphorylation"/>
</dbReference>
<dbReference type="Reactome" id="R-HSA-6804757">
    <property type="pathway name" value="Regulation of TP53 Degradation"/>
</dbReference>
<dbReference type="Reactome" id="R-HSA-6804760">
    <property type="pathway name" value="Regulation of TP53 Activity through Methylation"/>
</dbReference>
<dbReference type="Reactome" id="R-HSA-6807004">
    <property type="pathway name" value="Negative regulation of MET activity"/>
</dbReference>
<dbReference type="Reactome" id="R-HSA-68867">
    <property type="pathway name" value="Assembly of the pre-replicative complex"/>
</dbReference>
<dbReference type="Reactome" id="R-HSA-68949">
    <property type="pathway name" value="Orc1 removal from chromatin"/>
</dbReference>
<dbReference type="Reactome" id="R-HSA-69017">
    <property type="pathway name" value="CDK-mediated phosphorylation and removal of Cdc6"/>
</dbReference>
<dbReference type="Reactome" id="R-HSA-69231">
    <property type="pathway name" value="Cyclin D associated events in G1"/>
</dbReference>
<dbReference type="Reactome" id="R-HSA-69481">
    <property type="pathway name" value="G2/M Checkpoints"/>
</dbReference>
<dbReference type="Reactome" id="R-HSA-69541">
    <property type="pathway name" value="Stabilization of p53"/>
</dbReference>
<dbReference type="Reactome" id="R-HSA-69601">
    <property type="pathway name" value="Ubiquitin Mediated Degradation of Phosphorylated Cdc25A"/>
</dbReference>
<dbReference type="Reactome" id="R-HSA-72649">
    <property type="pathway name" value="Translation initiation complex formation"/>
</dbReference>
<dbReference type="Reactome" id="R-HSA-72689">
    <property type="pathway name" value="Formation of a pool of free 40S subunits"/>
</dbReference>
<dbReference type="Reactome" id="R-HSA-72695">
    <property type="pathway name" value="Formation of the ternary complex, and subsequently, the 43S complex"/>
</dbReference>
<dbReference type="Reactome" id="R-HSA-72702">
    <property type="pathway name" value="Ribosomal scanning and start codon recognition"/>
</dbReference>
<dbReference type="Reactome" id="R-HSA-72706">
    <property type="pathway name" value="GTP hydrolysis and joining of the 60S ribosomal subunit"/>
</dbReference>
<dbReference type="Reactome" id="R-HSA-72764">
    <property type="pathway name" value="Eukaryotic Translation Termination"/>
</dbReference>
<dbReference type="Reactome" id="R-HSA-75815">
    <property type="pathway name" value="Ubiquitin-dependent degradation of Cyclin D"/>
</dbReference>
<dbReference type="Reactome" id="R-HSA-8849469">
    <property type="pathway name" value="PTK6 Regulates RTKs and Their Effectors AKT1 and DOK1"/>
</dbReference>
<dbReference type="Reactome" id="R-HSA-8852276">
    <property type="pathway name" value="The role of GTSE1 in G2/M progression after G2 checkpoint"/>
</dbReference>
<dbReference type="Reactome" id="R-HSA-8854050">
    <property type="pathway name" value="FBXL7 down-regulates AURKA during mitotic entry and in early mitosis"/>
</dbReference>
<dbReference type="Reactome" id="R-HSA-8856825">
    <property type="pathway name" value="Cargo recognition for clathrin-mediated endocytosis"/>
</dbReference>
<dbReference type="Reactome" id="R-HSA-8856828">
    <property type="pathway name" value="Clathrin-mediated endocytosis"/>
</dbReference>
<dbReference type="Reactome" id="R-HSA-8863795">
    <property type="pathway name" value="Downregulation of ERBB2 signaling"/>
</dbReference>
<dbReference type="Reactome" id="R-HSA-8866427">
    <property type="pathway name" value="VLDLR internalisation and degradation"/>
</dbReference>
<dbReference type="Reactome" id="R-HSA-8866652">
    <property type="pathway name" value="Synthesis of active ubiquitin: roles of E1 and E2 enzymes"/>
</dbReference>
<dbReference type="Reactome" id="R-HSA-8866654">
    <property type="pathway name" value="E3 ubiquitin ligases ubiquitinate target proteins"/>
</dbReference>
<dbReference type="Reactome" id="R-HSA-8875360">
    <property type="pathway name" value="InlB-mediated entry of Listeria monocytogenes into host cell"/>
</dbReference>
<dbReference type="Reactome" id="R-HSA-8876493">
    <property type="pathway name" value="InlA-mediated entry of Listeria monocytogenes into host cells"/>
</dbReference>
<dbReference type="Reactome" id="R-HSA-8939236">
    <property type="pathway name" value="RUNX1 regulates transcription of genes involved in differentiation of HSCs"/>
</dbReference>
<dbReference type="Reactome" id="R-HSA-8939902">
    <property type="pathway name" value="Regulation of RUNX2 expression and activity"/>
</dbReference>
<dbReference type="Reactome" id="R-HSA-8941858">
    <property type="pathway name" value="Regulation of RUNX3 expression and activity"/>
</dbReference>
<dbReference type="Reactome" id="R-HSA-8948747">
    <property type="pathway name" value="Regulation of PTEN localization"/>
</dbReference>
<dbReference type="Reactome" id="R-HSA-8948751">
    <property type="pathway name" value="Regulation of PTEN stability and activity"/>
</dbReference>
<dbReference type="Reactome" id="R-HSA-8951664">
    <property type="pathway name" value="Neddylation"/>
</dbReference>
<dbReference type="Reactome" id="R-HSA-901032">
    <property type="pathway name" value="ER Quality Control Compartment (ERQC)"/>
</dbReference>
<dbReference type="Reactome" id="R-HSA-9010553">
    <property type="pathway name" value="Regulation of expression of SLITs and ROBOs"/>
</dbReference>
<dbReference type="Reactome" id="R-HSA-9013507">
    <property type="pathway name" value="NOTCH3 Activation and Transmission of Signal to the Nucleus"/>
</dbReference>
<dbReference type="Reactome" id="R-HSA-9013973">
    <property type="pathway name" value="TICAM1-dependent activation of IRF3/IRF7"/>
</dbReference>
<dbReference type="Reactome" id="R-HSA-9014325">
    <property type="pathway name" value="TICAM1,TRAF6-dependent induction of TAK1 complex"/>
</dbReference>
<dbReference type="Reactome" id="R-HSA-9020702">
    <property type="pathway name" value="Interleukin-1 signaling"/>
</dbReference>
<dbReference type="Reactome" id="R-HSA-9033241">
    <property type="pathway name" value="Peroxisomal protein import"/>
</dbReference>
<dbReference type="Reactome" id="R-HSA-909733">
    <property type="pathway name" value="Interferon alpha/beta signaling"/>
</dbReference>
<dbReference type="Reactome" id="R-HSA-912631">
    <property type="pathway name" value="Regulation of signaling by CBL"/>
</dbReference>
<dbReference type="Reactome" id="R-HSA-917729">
    <property type="pathway name" value="Endosomal Sorting Complex Required For Transport (ESCRT)"/>
</dbReference>
<dbReference type="Reactome" id="R-HSA-917937">
    <property type="pathway name" value="Iron uptake and transport"/>
</dbReference>
<dbReference type="Reactome" id="R-HSA-936440">
    <property type="pathway name" value="Negative regulators of DDX58/IFIH1 signaling"/>
</dbReference>
<dbReference type="Reactome" id="R-HSA-936964">
    <property type="pathway name" value="Activation of IRF3, IRF7 mediated by TBK1, IKKEpsilon (IKBKE)"/>
</dbReference>
<dbReference type="Reactome" id="R-HSA-937039">
    <property type="pathway name" value="IRAK1 recruits IKK complex"/>
</dbReference>
<dbReference type="Reactome" id="R-HSA-937041">
    <property type="pathway name" value="IKK complex recruitment mediated by RIP1"/>
</dbReference>
<dbReference type="Reactome" id="R-HSA-937042">
    <property type="pathway name" value="IRAK2 mediated activation of TAK1 complex"/>
</dbReference>
<dbReference type="Reactome" id="R-HSA-937072">
    <property type="pathway name" value="TRAF6-mediated induction of TAK1 complex within TLR4 complex"/>
</dbReference>
<dbReference type="Reactome" id="R-HSA-9604323">
    <property type="pathway name" value="Negative regulation of NOTCH4 signaling"/>
</dbReference>
<dbReference type="Reactome" id="R-HSA-9613829">
    <property type="pathway name" value="Chaperone Mediated Autophagy"/>
</dbReference>
<dbReference type="Reactome" id="R-HSA-9615710">
    <property type="pathway name" value="Late endosomal microautophagy"/>
</dbReference>
<dbReference type="Reactome" id="R-HSA-9633012">
    <property type="pathway name" value="Response of EIF2AK4 (GCN2) to amino acid deficiency"/>
</dbReference>
<dbReference type="Reactome" id="R-HSA-9636383">
    <property type="pathway name" value="Prevention of phagosomal-lysosomal fusion"/>
</dbReference>
<dbReference type="Reactome" id="R-HSA-9637628">
    <property type="pathway name" value="Modulation by Mtb of host immune system"/>
</dbReference>
<dbReference type="Reactome" id="R-HSA-9645460">
    <property type="pathway name" value="Alpha-protein kinase 1 signaling pathway"/>
</dbReference>
<dbReference type="Reactome" id="R-HSA-9646399">
    <property type="pathway name" value="Aggrephagy"/>
</dbReference>
<dbReference type="Reactome" id="R-HSA-9648002">
    <property type="pathway name" value="RAS processing"/>
</dbReference>
<dbReference type="Reactome" id="R-HSA-9664873">
    <property type="pathway name" value="Pexophagy"/>
</dbReference>
<dbReference type="Reactome" id="R-HSA-9680350">
    <property type="pathway name" value="Signaling by CSF1 (M-CSF) in myeloid cells"/>
</dbReference>
<dbReference type="Reactome" id="R-HSA-9683683">
    <property type="pathway name" value="Maturation of protein E"/>
</dbReference>
<dbReference type="Reactome" id="R-HSA-9692916">
    <property type="pathway name" value="SARS-CoV-1 activates/modulates innate immune responses"/>
</dbReference>
<dbReference type="Reactome" id="R-HSA-9694493">
    <property type="pathway name" value="Maturation of protein E"/>
</dbReference>
<dbReference type="Reactome" id="R-HSA-9705462">
    <property type="pathway name" value="Inactivation of CSF3 (G-CSF) signaling"/>
</dbReference>
<dbReference type="Reactome" id="R-HSA-9705671">
    <property type="pathway name" value="SARS-CoV-2 activates/modulates innate and adaptive immune responses"/>
</dbReference>
<dbReference type="Reactome" id="R-HSA-9706369">
    <property type="pathway name" value="Negative regulation of FLT3"/>
</dbReference>
<dbReference type="Reactome" id="R-HSA-9706377">
    <property type="pathway name" value="FLT3 signaling by CBL mutants"/>
</dbReference>
<dbReference type="Reactome" id="R-HSA-9708530">
    <property type="pathway name" value="Regulation of BACH1 activity"/>
</dbReference>
<dbReference type="Reactome" id="R-HSA-9725370">
    <property type="pathway name" value="Signaling by ALK fusions and activated point mutants"/>
</dbReference>
<dbReference type="Reactome" id="R-HSA-9735869">
    <property type="pathway name" value="SARS-CoV-1 modulates host translation machinery"/>
</dbReference>
<dbReference type="Reactome" id="R-HSA-975110">
    <property type="pathway name" value="TRAF6 mediated IRF7 activation in TLR7/8 or 9 signaling"/>
</dbReference>
<dbReference type="Reactome" id="R-HSA-975144">
    <property type="pathway name" value="IRAK1 recruits IKK complex upon TLR7/8 or 9 stimulation"/>
</dbReference>
<dbReference type="Reactome" id="R-HSA-975163">
    <property type="pathway name" value="IRAK2 mediated activation of TAK1 complex upon TLR7/8 or 9 stimulation"/>
</dbReference>
<dbReference type="Reactome" id="R-HSA-9754678">
    <property type="pathway name" value="SARS-CoV-2 modulates host translation machinery"/>
</dbReference>
<dbReference type="Reactome" id="R-HSA-9755511">
    <property type="pathway name" value="KEAP1-NFE2L2 pathway"/>
</dbReference>
<dbReference type="Reactome" id="R-HSA-9758274">
    <property type="pathway name" value="Regulation of NF-kappa B signaling"/>
</dbReference>
<dbReference type="Reactome" id="R-HSA-975956">
    <property type="pathway name" value="Nonsense Mediated Decay (NMD) independent of the Exon Junction Complex (EJC)"/>
</dbReference>
<dbReference type="Reactome" id="R-HSA-975957">
    <property type="pathway name" value="Nonsense Mediated Decay (NMD) enhanced by the Exon Junction Complex (EJC)"/>
</dbReference>
<dbReference type="Reactome" id="R-HSA-9762114">
    <property type="pathway name" value="GSK3B and BTRC:CUL1-mediated-degradation of NFE2L2"/>
</dbReference>
<dbReference type="Reactome" id="R-HSA-977225">
    <property type="pathway name" value="Amyloid fiber formation"/>
</dbReference>
<dbReference type="Reactome" id="R-HSA-9824878">
    <property type="pathway name" value="Regulation of TBK1, IKKEpsilon (IKBKE)-mediated activation of IRF3, IRF7"/>
</dbReference>
<dbReference type="Reactome" id="R-HSA-9828211">
    <property type="pathway name" value="Regulation of TBK1, IKKEpsilon-mediated activation of IRF3, IRF7 upon TLR3 ligation"/>
</dbReference>
<dbReference type="Reactome" id="R-HSA-983168">
    <property type="pathway name" value="Antigen processing: Ubiquitination &amp; Proteasome degradation"/>
</dbReference>
<dbReference type="Reactome" id="R-HSA-9833109">
    <property type="pathway name" value="Evasion by RSV of host interferon responses"/>
</dbReference>
<dbReference type="Reactome" id="R-HSA-9861718">
    <property type="pathway name" value="Regulation of pyruvate metabolism"/>
</dbReference>
<dbReference type="SignaLink" id="P62979"/>
<dbReference type="SIGNOR" id="P62979"/>
<dbReference type="BioGRID-ORCS" id="6233">
    <property type="hits" value="774 hits in 1103 CRISPR screens"/>
</dbReference>
<dbReference type="CD-CODE" id="232F8A39">
    <property type="entry name" value="P-body"/>
</dbReference>
<dbReference type="CD-CODE" id="91857CE7">
    <property type="entry name" value="Nucleolus"/>
</dbReference>
<dbReference type="ChiTaRS" id="RPS27A">
    <property type="organism name" value="human"/>
</dbReference>
<dbReference type="EvolutionaryTrace" id="P62979"/>
<dbReference type="GeneWiki" id="RPS27A"/>
<dbReference type="GenomeRNAi" id="6233"/>
<dbReference type="Pharos" id="P62979">
    <property type="development level" value="Tbio"/>
</dbReference>
<dbReference type="PRO" id="PR:P62979"/>
<dbReference type="Proteomes" id="UP000005640">
    <property type="component" value="Chromosome 2"/>
</dbReference>
<dbReference type="RNAct" id="P62979">
    <property type="molecule type" value="protein"/>
</dbReference>
<dbReference type="Bgee" id="ENSG00000143947">
    <property type="expression patterns" value="Expressed in left ovary and 164 other cell types or tissues"/>
</dbReference>
<dbReference type="ExpressionAtlas" id="P62979">
    <property type="expression patterns" value="baseline and differential"/>
</dbReference>
<dbReference type="GO" id="GO:0005737">
    <property type="term" value="C:cytoplasm"/>
    <property type="evidence" value="ECO:0007005"/>
    <property type="project" value="UniProtKB"/>
</dbReference>
<dbReference type="GO" id="GO:0005829">
    <property type="term" value="C:cytosol"/>
    <property type="evidence" value="ECO:0000314"/>
    <property type="project" value="HPA"/>
</dbReference>
<dbReference type="GO" id="GO:0022626">
    <property type="term" value="C:cytosolic ribosome"/>
    <property type="evidence" value="ECO:0000314"/>
    <property type="project" value="FlyBase"/>
</dbReference>
<dbReference type="GO" id="GO:0022627">
    <property type="term" value="C:cytosolic small ribosomal subunit"/>
    <property type="evidence" value="ECO:0000303"/>
    <property type="project" value="ComplexPortal"/>
</dbReference>
<dbReference type="GO" id="GO:0030666">
    <property type="term" value="C:endocytic vesicle membrane"/>
    <property type="evidence" value="ECO:0000304"/>
    <property type="project" value="Reactome"/>
</dbReference>
<dbReference type="GO" id="GO:0005783">
    <property type="term" value="C:endoplasmic reticulum"/>
    <property type="evidence" value="ECO:0000314"/>
    <property type="project" value="HPA"/>
</dbReference>
<dbReference type="GO" id="GO:0005789">
    <property type="term" value="C:endoplasmic reticulum membrane"/>
    <property type="evidence" value="ECO:0000304"/>
    <property type="project" value="Reactome"/>
</dbReference>
<dbReference type="GO" id="GO:0010008">
    <property type="term" value="C:endosome membrane"/>
    <property type="evidence" value="ECO:0000304"/>
    <property type="project" value="Reactome"/>
</dbReference>
<dbReference type="GO" id="GO:0070062">
    <property type="term" value="C:extracellular exosome"/>
    <property type="evidence" value="ECO:0007005"/>
    <property type="project" value="UniProtKB"/>
</dbReference>
<dbReference type="GO" id="GO:0005615">
    <property type="term" value="C:extracellular space"/>
    <property type="evidence" value="ECO:0007005"/>
    <property type="project" value="UniProtKB"/>
</dbReference>
<dbReference type="GO" id="GO:0016020">
    <property type="term" value="C:membrane"/>
    <property type="evidence" value="ECO:0007005"/>
    <property type="project" value="UniProtKB"/>
</dbReference>
<dbReference type="GO" id="GO:0005741">
    <property type="term" value="C:mitochondrial outer membrane"/>
    <property type="evidence" value="ECO:0000304"/>
    <property type="project" value="Reactome"/>
</dbReference>
<dbReference type="GO" id="GO:0005730">
    <property type="term" value="C:nucleolus"/>
    <property type="evidence" value="ECO:0000314"/>
    <property type="project" value="HPA"/>
</dbReference>
<dbReference type="GO" id="GO:0005654">
    <property type="term" value="C:nucleoplasm"/>
    <property type="evidence" value="ECO:0000304"/>
    <property type="project" value="Reactome"/>
</dbReference>
<dbReference type="GO" id="GO:0005634">
    <property type="term" value="C:nucleus"/>
    <property type="evidence" value="ECO:0007005"/>
    <property type="project" value="UniProtKB"/>
</dbReference>
<dbReference type="GO" id="GO:0005886">
    <property type="term" value="C:plasma membrane"/>
    <property type="evidence" value="ECO:0000304"/>
    <property type="project" value="Reactome"/>
</dbReference>
<dbReference type="GO" id="GO:0032040">
    <property type="term" value="C:small-subunit processome"/>
    <property type="evidence" value="ECO:0000314"/>
    <property type="project" value="UniProtKB"/>
</dbReference>
<dbReference type="GO" id="GO:0045202">
    <property type="term" value="C:synapse"/>
    <property type="evidence" value="ECO:0007669"/>
    <property type="project" value="Ensembl"/>
</dbReference>
<dbReference type="GO" id="GO:0031982">
    <property type="term" value="C:vesicle"/>
    <property type="evidence" value="ECO:0007005"/>
    <property type="project" value="UniProtKB"/>
</dbReference>
<dbReference type="GO" id="GO:0031386">
    <property type="term" value="F:protein tag activity"/>
    <property type="evidence" value="ECO:0000318"/>
    <property type="project" value="GO_Central"/>
</dbReference>
<dbReference type="GO" id="GO:0003723">
    <property type="term" value="F:RNA binding"/>
    <property type="evidence" value="ECO:0007005"/>
    <property type="project" value="UniProtKB"/>
</dbReference>
<dbReference type="GO" id="GO:0003735">
    <property type="term" value="F:structural constituent of ribosome"/>
    <property type="evidence" value="ECO:0000314"/>
    <property type="project" value="FlyBase"/>
</dbReference>
<dbReference type="GO" id="GO:0031625">
    <property type="term" value="F:ubiquitin protein ligase binding"/>
    <property type="evidence" value="ECO:0000318"/>
    <property type="project" value="GO_Central"/>
</dbReference>
<dbReference type="GO" id="GO:0008270">
    <property type="term" value="F:zinc ion binding"/>
    <property type="evidence" value="ECO:0007669"/>
    <property type="project" value="UniProtKB-KW"/>
</dbReference>
<dbReference type="GO" id="GO:0002181">
    <property type="term" value="P:cytoplasmic translation"/>
    <property type="evidence" value="ECO:0000303"/>
    <property type="project" value="ComplexPortal"/>
</dbReference>
<dbReference type="GO" id="GO:0019941">
    <property type="term" value="P:modification-dependent protein catabolic process"/>
    <property type="evidence" value="ECO:0000318"/>
    <property type="project" value="GO_Central"/>
</dbReference>
<dbReference type="GO" id="GO:0016567">
    <property type="term" value="P:protein ubiquitination"/>
    <property type="evidence" value="ECO:0000318"/>
    <property type="project" value="GO_Central"/>
</dbReference>
<dbReference type="GO" id="GO:0006412">
    <property type="term" value="P:translation"/>
    <property type="evidence" value="ECO:0000305"/>
    <property type="project" value="UniProtKB"/>
</dbReference>
<dbReference type="CDD" id="cd01803">
    <property type="entry name" value="Ubl_ubiquitin"/>
    <property type="match status" value="1"/>
</dbReference>
<dbReference type="FunFam" id="3.10.20.90:FF:000008">
    <property type="entry name" value="Ubiquitin-40S ribosomal protein S27a"/>
    <property type="match status" value="1"/>
</dbReference>
<dbReference type="Gene3D" id="6.20.50.150">
    <property type="match status" value="1"/>
</dbReference>
<dbReference type="Gene3D" id="3.10.20.90">
    <property type="entry name" value="Phosphatidylinositol 3-kinase Catalytic Subunit, Chain A, domain 1"/>
    <property type="match status" value="1"/>
</dbReference>
<dbReference type="InterPro" id="IPR002906">
    <property type="entry name" value="Ribosomal_eS31"/>
</dbReference>
<dbReference type="InterPro" id="IPR038582">
    <property type="entry name" value="Ribosomal_eS31_euk-type_sf"/>
</dbReference>
<dbReference type="InterPro" id="IPR011332">
    <property type="entry name" value="Ribosomal_zn-bd"/>
</dbReference>
<dbReference type="InterPro" id="IPR000626">
    <property type="entry name" value="Ubiquitin-like_dom"/>
</dbReference>
<dbReference type="InterPro" id="IPR029071">
    <property type="entry name" value="Ubiquitin-like_domsf"/>
</dbReference>
<dbReference type="InterPro" id="IPR019954">
    <property type="entry name" value="Ubiquitin_CS"/>
</dbReference>
<dbReference type="InterPro" id="IPR019956">
    <property type="entry name" value="Ubiquitin_dom"/>
</dbReference>
<dbReference type="InterPro" id="IPR050158">
    <property type="entry name" value="Ubiquitin_ubiquitin-like"/>
</dbReference>
<dbReference type="PANTHER" id="PTHR10666">
    <property type="entry name" value="UBIQUITIN"/>
    <property type="match status" value="1"/>
</dbReference>
<dbReference type="Pfam" id="PF01599">
    <property type="entry name" value="Ribosomal_S27"/>
    <property type="match status" value="1"/>
</dbReference>
<dbReference type="Pfam" id="PF00240">
    <property type="entry name" value="ubiquitin"/>
    <property type="match status" value="1"/>
</dbReference>
<dbReference type="PRINTS" id="PR00348">
    <property type="entry name" value="UBIQUITIN"/>
</dbReference>
<dbReference type="SMART" id="SM01402">
    <property type="entry name" value="Ribosomal_S27"/>
    <property type="match status" value="1"/>
</dbReference>
<dbReference type="SMART" id="SM00213">
    <property type="entry name" value="UBQ"/>
    <property type="match status" value="1"/>
</dbReference>
<dbReference type="SUPFAM" id="SSF54236">
    <property type="entry name" value="Ubiquitin-like"/>
    <property type="match status" value="1"/>
</dbReference>
<dbReference type="SUPFAM" id="SSF57829">
    <property type="entry name" value="Zn-binding ribosomal proteins"/>
    <property type="match status" value="1"/>
</dbReference>
<dbReference type="PROSITE" id="PS00299">
    <property type="entry name" value="UBIQUITIN_1"/>
    <property type="match status" value="1"/>
</dbReference>
<dbReference type="PROSITE" id="PS50053">
    <property type="entry name" value="UBIQUITIN_2"/>
    <property type="match status" value="1"/>
</dbReference>
<evidence type="ECO:0000250" key="1"/>
<evidence type="ECO:0000250" key="2">
    <source>
        <dbReference type="UniProtKB" id="P62983"/>
    </source>
</evidence>
<evidence type="ECO:0000255" key="3">
    <source>
        <dbReference type="PROSITE-ProRule" id="PRU00214"/>
    </source>
</evidence>
<evidence type="ECO:0000256" key="4">
    <source>
        <dbReference type="SAM" id="MobiDB-lite"/>
    </source>
</evidence>
<evidence type="ECO:0000269" key="5">
    <source>
    </source>
</evidence>
<evidence type="ECO:0000269" key="6">
    <source>
    </source>
</evidence>
<evidence type="ECO:0000269" key="7">
    <source>
    </source>
</evidence>
<evidence type="ECO:0000269" key="8">
    <source>
    </source>
</evidence>
<evidence type="ECO:0000269" key="9">
    <source>
    </source>
</evidence>
<evidence type="ECO:0000269" key="10">
    <source>
    </source>
</evidence>
<evidence type="ECO:0000269" key="11">
    <source>
    </source>
</evidence>
<evidence type="ECO:0000269" key="12">
    <source>
    </source>
</evidence>
<evidence type="ECO:0000269" key="13">
    <source>
    </source>
</evidence>
<evidence type="ECO:0000269" key="14">
    <source>
    </source>
</evidence>
<evidence type="ECO:0000269" key="15">
    <source>
    </source>
</evidence>
<evidence type="ECO:0000269" key="16">
    <source>
    </source>
</evidence>
<evidence type="ECO:0000269" key="17">
    <source>
    </source>
</evidence>
<evidence type="ECO:0000269" key="18">
    <source>
    </source>
</evidence>
<evidence type="ECO:0000269" key="19">
    <source>
    </source>
</evidence>
<evidence type="ECO:0000269" key="20">
    <source>
    </source>
</evidence>
<evidence type="ECO:0000269" key="21">
    <source>
    </source>
</evidence>
<evidence type="ECO:0000303" key="22">
    <source>
    </source>
</evidence>
<evidence type="ECO:0000303" key="23">
    <source>
    </source>
</evidence>
<evidence type="ECO:0000305" key="24"/>
<evidence type="ECO:0000305" key="25">
    <source>
    </source>
</evidence>
<evidence type="ECO:0000305" key="26">
    <source>
    </source>
</evidence>
<evidence type="ECO:0000312" key="27">
    <source>
        <dbReference type="HGNC" id="HGNC:10417"/>
    </source>
</evidence>
<evidence type="ECO:0007744" key="28">
    <source>
        <dbReference type="PDB" id="7MQ9"/>
    </source>
</evidence>
<evidence type="ECO:0007744" key="29">
    <source>
        <dbReference type="PDB" id="7MQA"/>
    </source>
</evidence>
<evidence type="ECO:0007744" key="30">
    <source>
    </source>
</evidence>
<evidence type="ECO:0007829" key="31">
    <source>
        <dbReference type="PDB" id="3NHE"/>
    </source>
</evidence>
<evidence type="ECO:0007829" key="32">
    <source>
        <dbReference type="PDB" id="6SQS"/>
    </source>
</evidence>
<evidence type="ECO:0007829" key="33">
    <source>
        <dbReference type="PDB" id="6ZLW"/>
    </source>
</evidence>
<evidence type="ECO:0007829" key="34">
    <source>
        <dbReference type="PDB" id="6ZOJ"/>
    </source>
</evidence>
<evidence type="ECO:0007829" key="35">
    <source>
        <dbReference type="PDB" id="6ZXH"/>
    </source>
</evidence>
<evidence type="ECO:0007829" key="36">
    <source>
        <dbReference type="PDB" id="7R4X"/>
    </source>
</evidence>
<evidence type="ECO:0007829" key="37">
    <source>
        <dbReference type="PDB" id="8HTC"/>
    </source>
</evidence>
<evidence type="ECO:0007829" key="38">
    <source>
        <dbReference type="PDB" id="8T4S"/>
    </source>
</evidence>
<sequence length="156" mass="17965">MQIFVKTLTGKTITLEVEPSDTIENVKAKIQDKEGIPPDQQRLIFAGKQLEDGRTLSDYNIQKESTLHLVLRLRGGAKKRKKKSYTTPKKNKHKRKKVKLAVLKYYKVDENGKISRLRRECPSDECGAGVFMASHFDRHYCGKCCLTYCFNKPEDK</sequence>
<gene>
    <name evidence="27" type="primary">RPS27A</name>
    <name type="synonym">UBA80</name>
    <name type="synonym">UBCEP1</name>
</gene>
<comment type="function">
    <molecule>Ubiquitin</molecule>
    <text evidence="6 19 22">Exists either covalently attached to another protein, or free (unanchored). When covalently bound, it is conjugated to target proteins via an isopeptide bond either as a monomer (monoubiquitin), a polymer linked via different Lys residues of the ubiquitin (polyubiquitin chains) or a linear polymer linked via the initiator Met of the ubiquitin (linear polyubiquitin chains). Polyubiquitin chains, when attached to a target protein, have different functions depending on the Lys residue of the ubiquitin that is linked: Lys-6-linked may be involved in DNA repair; Lys-11-linked is involved in ERAD (endoplasmic reticulum-associated degradation) and in cell-cycle regulation; Lys-29-linked is involved in proteotoxic stress response and cell cycle; Lys-33-linked is involved in kinase modification; Lys-48-linked is involved in protein degradation via the proteasome; Lys-63-linked is involved in endocytosis, DNA-damage responses as well as in signaling processes leading to activation of the transcription factor NF-kappa-B. Linear polymer chains formed via attachment by the initiator Met lead to cell signaling. Ubiquitin is usually conjugated to Lys residues of target proteins, however, in rare cases, conjugation to Cys or Ser residues has been observed. When polyubiquitin is free (unanchored-polyubiquitin), it also has distinct roles, such as in activation of protein kinases, and in signaling.</text>
</comment>
<comment type="function">
    <molecule>Small ribosomal subunit protein eS31</molecule>
    <text evidence="8 20 26">Component of the 40S subunit of the ribosome (PubMed:23636399, PubMed:9582194). Part of the small subunit (SSU) processome, first precursor of the small eukaryotic ribosomal subunit. During the assembly of the SSU processome in the nucleolus, many ribosome biogenesis factors, an RNA chaperone and ribosomal proteins associate with the nascent pre-rRNA and work in concert to generate RNA folding, modifications, rearrangements and cleavage as well as targeted degradation of pre-ribosomal RNA by the RNA exosome (PubMed:23636399, PubMed:34516797).</text>
</comment>
<comment type="subunit">
    <molecule>Small ribosomal subunit protein eS31</molecule>
    <text evidence="8 20 26">Part of the 40S ribosomal subunit (PubMed:23636399, PubMed:9582194). Part of the small subunit (SSU) processome, composed of more than 70 proteins and the RNA chaperone small nucleolar RNA (snoRNA) U3 (PubMed:23636399, PubMed:34516797).</text>
</comment>
<comment type="interaction">
    <interactant intactId="EBI-357375">
        <id>P62979</id>
    </interactant>
    <interactant intactId="EBI-739580">
        <id>Q13137</id>
        <label>CALCOCO2</label>
    </interactant>
    <organismsDiffer>false</organismsDiffer>
    <experiments>3</experiments>
</comment>
<comment type="interaction">
    <interactant intactId="EBI-357375">
        <id>P62979</id>
    </interactant>
    <interactant intactId="EBI-724310">
        <id>Q15038</id>
        <label>DAZAP2</label>
    </interactant>
    <organismsDiffer>false</organismsDiffer>
    <experiments>9</experiments>
</comment>
<comment type="interaction">
    <interactant intactId="EBI-357375">
        <id>P62979</id>
    </interactant>
    <interactant intactId="EBI-2806959">
        <id>Q6ICB0</id>
        <label>DESI1</label>
    </interactant>
    <organismsDiffer>false</organismsDiffer>
    <experiments>3</experiments>
</comment>
<comment type="interaction">
    <interactant intactId="EBI-357375">
        <id>P62979</id>
    </interactant>
    <interactant intactId="EBI-12866582">
        <id>I6L9I8</id>
        <label>EPN3</label>
    </interactant>
    <organismsDiffer>false</organismsDiffer>
    <experiments>3</experiments>
</comment>
<comment type="interaction">
    <interactant intactId="EBI-357375">
        <id>P62979</id>
    </interactant>
    <interactant intactId="EBI-11978259">
        <id>Q92567-2</id>
        <label>FAM168A</label>
    </interactant>
    <organismsDiffer>false</organismsDiffer>
    <experiments>3</experiments>
</comment>
<comment type="interaction">
    <interactant intactId="EBI-357375">
        <id>P62979</id>
    </interactant>
    <interactant intactId="EBI-352682">
        <id>P04792</id>
        <label>HSPB1</label>
    </interactant>
    <organismsDiffer>false</organismsDiffer>
    <experiments>3</experiments>
</comment>
<comment type="interaction">
    <interactant intactId="EBI-357375">
        <id>P62979</id>
    </interactant>
    <interactant intactId="EBI-466029">
        <id>P42858</id>
        <label>HTT</label>
    </interactant>
    <organismsDiffer>false</organismsDiffer>
    <experiments>6</experiments>
</comment>
<comment type="interaction">
    <interactant intactId="EBI-357375">
        <id>P62979</id>
    </interactant>
    <interactant intactId="EBI-725647">
        <id>Q99732</id>
        <label>LITAF</label>
    </interactant>
    <organismsDiffer>false</organismsDiffer>
    <experiments>3</experiments>
</comment>
<comment type="interaction">
    <interactant intactId="EBI-357375">
        <id>P62979</id>
    </interactant>
    <interactant intactId="EBI-11980301">
        <id>Q8N3F0</id>
        <label>MTURN</label>
    </interactant>
    <organismsDiffer>false</organismsDiffer>
    <experiments>3</experiments>
</comment>
<comment type="interaction">
    <interactant intactId="EBI-357375">
        <id>P62979</id>
    </interactant>
    <interactant intactId="EBI-373552">
        <id>Q96CS7</id>
        <label>PLEKHB2</label>
    </interactant>
    <organismsDiffer>false</organismsDiffer>
    <experiments>3</experiments>
</comment>
<comment type="interaction">
    <interactant intactId="EBI-357375">
        <id>P62979</id>
    </interactant>
    <interactant intactId="EBI-769257">
        <id>Q9NRQ2</id>
        <label>PLSCR4</label>
    </interactant>
    <organismsDiffer>false</organismsDiffer>
    <experiments>3</experiments>
</comment>
<comment type="interaction">
    <interactant intactId="EBI-357375">
        <id>P62979</id>
    </interactant>
    <interactant intactId="EBI-746453">
        <id>P54725</id>
        <label>RAD23A</label>
    </interactant>
    <organismsDiffer>false</organismsDiffer>
    <experiments>3</experiments>
</comment>
<comment type="interaction">
    <interactant intactId="EBI-357375">
        <id>P62979</id>
    </interactant>
    <interactant intactId="EBI-396669">
        <id>Q9Y3C5</id>
        <label>RNF11</label>
    </interactant>
    <organismsDiffer>false</organismsDiffer>
    <experiments>4</experiments>
</comment>
<comment type="interaction">
    <interactant intactId="EBI-357375">
        <id>P62979</id>
    </interactant>
    <interactant intactId="EBI-741480">
        <id>Q9UMX0</id>
        <label>UBQLN1</label>
    </interactant>
    <organismsDiffer>false</organismsDiffer>
    <experiments>3</experiments>
</comment>
<comment type="interaction">
    <interactant intactId="EBI-357375">
        <id>P62979</id>
    </interactant>
    <interactant intactId="EBI-947187">
        <id>Q9UHD9</id>
        <label>UBQLN2</label>
    </interactant>
    <organismsDiffer>false</organismsDiffer>
    <experiments>3</experiments>
</comment>
<comment type="interaction">
    <interactant intactId="EBI-357375">
        <id>P62979</id>
    </interactant>
    <interactant intactId="EBI-720609">
        <id>O76024</id>
        <label>WFS1</label>
    </interactant>
    <organismsDiffer>false</organismsDiffer>
    <experiments>3</experiments>
</comment>
<comment type="subcellular location">
    <molecule>Small ribosomal subunit protein eS31</molecule>
    <subcellularLocation>
        <location evidence="8">Cytoplasm</location>
    </subcellularLocation>
    <subcellularLocation>
        <location evidence="20">Nucleus</location>
        <location evidence="20">Nucleolus</location>
    </subcellularLocation>
</comment>
<comment type="subcellular location">
    <molecule>Ubiquitin</molecule>
    <subcellularLocation>
        <location evidence="1">Cytoplasm</location>
    </subcellularLocation>
    <subcellularLocation>
        <location evidence="1">Nucleus</location>
    </subcellularLocation>
</comment>
<comment type="PTM">
    <molecule>Ubiquitin</molecule>
    <text evidence="9 10 11 13">Phosphorylated at Ser-65 by PINK1 during mitophagy (PubMed:24660806, PubMed:24751536, PubMed:24784582, PubMed:25527291). Phosphorylated ubiquitin specifically binds and activates parkin (PRKN), triggering mitophagy (PubMed:24660806, PubMed:24751536, PubMed:24784582, PubMed:25527291). Phosphorylation does not affect E1-mediated E2 charging of ubiquitin but affects discharging of E2 enzymes to form polyubiquitin chains. It also affects deubiquitination by deubiquitinase enzymes such as USP30 (PubMed:25527291).</text>
</comment>
<comment type="PTM">
    <molecule>Ubiquitin</molecule>
    <text evidence="16">Mono-ADP-ribosylated at the C-terminus by PARP9, a component of the PPAR9-DTX3L complex. ADP-ribosylation requires processing by E1 and E2 enzymes and prevents ubiquitin conjugation to substrates such as histones.</text>
</comment>
<comment type="PTM">
    <molecule>Ubiquitin</molecule>
    <text evidence="18">(Microbial infection) Mono-ADP-ribosylated at Thr-66 by the C.violaceum CteC virulence factor. ADP-ribosylation causes the shutdown of polyubiquitin synthesis and disrupts the recognition and reversal of polyubiquitin.</text>
</comment>
<comment type="PTM">
    <molecule>Small ribosomal subunit protein eS31</molecule>
    <text evidence="17 21">Monoubiquitinated at Lys-107 and Lys-113 by RNF25 in response to ribosome collisions (ribosome stalling): ubiquitination promotes subsequent activation of RNF14, leading to EEF1A1 ubiquitination and degradation and rescue of stalled ribosomes (PubMed:36638793). Deubiquitination at Lys-113 by USP16 is required for maturation of the 40S ribosomal complex (PubMed:32129764).</text>
</comment>
<comment type="miscellaneous">
    <text>Ubiquitin is encoded by 4 different genes. UBA52 and RPS27A genes code for a single copy of ubiquitin fused to the ribosomal proteins eL40 and eS31, respectively. UBB and UBC genes code for a polyubiquitin precursor with exact head to tail repeats, the number of repeats differ between species and strains.</text>
</comment>
<comment type="miscellaneous">
    <text>For a better understanding, features related to ubiquitin are only indicated for the first chain.</text>
</comment>
<comment type="similarity">
    <text evidence="24">In the N-terminal section; belongs to the ubiquitin family.</text>
</comment>
<comment type="similarity">
    <text evidence="24">In the C-terminal section; belongs to the eukaryotic ribosomal protein eS31 family.</text>
</comment>
<proteinExistence type="evidence at protein level"/>
<name>RS27A_HUMAN</name>
<organism>
    <name type="scientific">Homo sapiens</name>
    <name type="common">Human</name>
    <dbReference type="NCBI Taxonomy" id="9606"/>
    <lineage>
        <taxon>Eukaryota</taxon>
        <taxon>Metazoa</taxon>
        <taxon>Chordata</taxon>
        <taxon>Craniata</taxon>
        <taxon>Vertebrata</taxon>
        <taxon>Euteleostomi</taxon>
        <taxon>Mammalia</taxon>
        <taxon>Eutheria</taxon>
        <taxon>Euarchontoglires</taxon>
        <taxon>Primates</taxon>
        <taxon>Haplorrhini</taxon>
        <taxon>Catarrhini</taxon>
        <taxon>Hominidae</taxon>
        <taxon>Homo</taxon>
    </lineage>
</organism>